<protein>
    <recommendedName>
        <fullName>Genome polyprotein</fullName>
    </recommendedName>
    <component>
        <recommendedName>
            <fullName>Core protein precursor</fullName>
        </recommendedName>
        <alternativeName>
            <fullName>Capsid protein C</fullName>
        </alternativeName>
        <alternativeName>
            <fullName>p23</fullName>
        </alternativeName>
    </component>
    <component>
        <recommendedName>
            <fullName>Mature core protein</fullName>
        </recommendedName>
        <alternativeName>
            <fullName>p21</fullName>
        </alternativeName>
    </component>
    <component>
        <recommendedName>
            <fullName>Envelope glycoprotein E1</fullName>
        </recommendedName>
        <alternativeName>
            <fullName>gp32</fullName>
        </alternativeName>
        <alternativeName>
            <fullName>gp35</fullName>
        </alternativeName>
    </component>
    <component>
        <recommendedName>
            <fullName>Envelope glycoprotein E2</fullName>
        </recommendedName>
        <alternativeName>
            <fullName>NS1</fullName>
        </alternativeName>
        <alternativeName>
            <fullName>gp68</fullName>
        </alternativeName>
        <alternativeName>
            <fullName>gp70</fullName>
        </alternativeName>
    </component>
    <component>
        <recommendedName>
            <fullName>Viroporin p7</fullName>
        </recommendedName>
    </component>
    <component>
        <recommendedName>
            <fullName>Protease NS2</fullName>
            <shortName>p23</shortName>
            <ecNumber evidence="4">3.4.22.-</ecNumber>
        </recommendedName>
        <alternativeName>
            <fullName>Non-structural protein 2</fullName>
            <shortName>NS2</shortName>
        </alternativeName>
    </component>
    <component>
        <recommendedName>
            <fullName>Serine protease/helicase NS3</fullName>
            <ecNumber evidence="6">3.4.21.98</ecNumber>
            <ecNumber evidence="6">3.6.1.15</ecNumber>
            <ecNumber evidence="6">3.6.4.13</ecNumber>
        </recommendedName>
        <alternativeName>
            <fullName>Hepacivirin</fullName>
        </alternativeName>
        <alternativeName>
            <fullName evidence="6">NS3 helicase</fullName>
        </alternativeName>
        <alternativeName>
            <fullName evidence="6">NS3 protease</fullName>
        </alternativeName>
        <alternativeName>
            <fullName>NS3P</fullName>
        </alternativeName>
        <alternativeName>
            <fullName>Viroporin p70</fullName>
        </alternativeName>
    </component>
    <component>
        <recommendedName>
            <fullName>Non-structural protein 4A</fullName>
            <shortName>NS4A</shortName>
        </recommendedName>
        <alternativeName>
            <fullName>p8</fullName>
        </alternativeName>
    </component>
    <component>
        <recommendedName>
            <fullName>Non-structural protein 4B</fullName>
            <shortName>NS4B</shortName>
        </recommendedName>
        <alternativeName>
            <fullName>p27</fullName>
        </alternativeName>
    </component>
    <component>
        <recommendedName>
            <fullName>Non-structural protein 5A</fullName>
            <shortName>NS5A</shortName>
        </recommendedName>
        <alternativeName>
            <fullName>p56/58</fullName>
        </alternativeName>
    </component>
    <component>
        <recommendedName>
            <fullName>RNA-directed RNA polymerase</fullName>
            <ecNumber evidence="6">2.7.7.48</ecNumber>
        </recommendedName>
        <alternativeName>
            <fullName>NS5B</fullName>
        </alternativeName>
        <alternativeName>
            <fullName>p68</fullName>
        </alternativeName>
    </component>
</protein>
<keyword id="KW-0007">Acetylation</keyword>
<keyword id="KW-1072">Activation of host autophagy by virus</keyword>
<keyword id="KW-0053">Apoptosis</keyword>
<keyword id="KW-0067">ATP-binding</keyword>
<keyword id="KW-0167">Capsid protein</keyword>
<keyword id="KW-1165">Clathrin-mediated endocytosis of virus by host</keyword>
<keyword id="KW-1015">Disulfide bond</keyword>
<keyword id="KW-1170">Fusion of virus membrane with host endosomal membrane</keyword>
<keyword id="KW-1168">Fusion of virus membrane with host membrane</keyword>
<keyword id="KW-1078">G1/S host cell cycle checkpoint dysregulation by virus</keyword>
<keyword id="KW-0325">Glycoprotein</keyword>
<keyword id="KW-0347">Helicase</keyword>
<keyword id="KW-1032">Host cell membrane</keyword>
<keyword id="KW-1035">Host cytoplasm</keyword>
<keyword id="KW-1038">Host endoplasmic reticulum</keyword>
<keyword id="KW-1041">Host lipid droplet</keyword>
<keyword id="KW-1043">Host membrane</keyword>
<keyword id="KW-1045">Host mitochondrion</keyword>
<keyword id="KW-1048">Host nucleus</keyword>
<keyword id="KW-0945">Host-virus interaction</keyword>
<keyword id="KW-0378">Hydrolase</keyword>
<keyword id="KW-1090">Inhibition of host innate immune response by virus</keyword>
<keyword id="KW-1114">Inhibition of host interferon signaling pathway by virus</keyword>
<keyword id="KW-1097">Inhibition of host MAVS by virus</keyword>
<keyword id="KW-1113">Inhibition of host RLR pathway by virus</keyword>
<keyword id="KW-1105">Inhibition of host STAT1 by virus</keyword>
<keyword id="KW-1110">Inhibition of host TRAFs by virus</keyword>
<keyword id="KW-0922">Interferon antiviral system evasion</keyword>
<keyword id="KW-0407">Ion channel</keyword>
<keyword id="KW-0406">Ion transport</keyword>
<keyword id="KW-1017">Isopeptide bond</keyword>
<keyword id="KW-0449">Lipoprotein</keyword>
<keyword id="KW-0460">Magnesium</keyword>
<keyword id="KW-0472">Membrane</keyword>
<keyword id="KW-0479">Metal-binding</keyword>
<keyword id="KW-1121">Modulation of host cell cycle by virus</keyword>
<keyword id="KW-0511">Multifunctional enzyme</keyword>
<keyword id="KW-0547">Nucleotide-binding</keyword>
<keyword id="KW-0548">Nucleotidyltransferase</keyword>
<keyword id="KW-0553">Oncogene</keyword>
<keyword id="KW-0564">Palmitate</keyword>
<keyword id="KW-0597">Phosphoprotein</keyword>
<keyword id="KW-0645">Protease</keyword>
<keyword id="KW-0687">Ribonucleoprotein</keyword>
<keyword id="KW-0694">RNA-binding</keyword>
<keyword id="KW-0696">RNA-directed RNA polymerase</keyword>
<keyword id="KW-0720">Serine protease</keyword>
<keyword id="KW-0729">SH3-binding</keyword>
<keyword id="KW-0788">Thiol protease</keyword>
<keyword id="KW-0804">Transcription</keyword>
<keyword id="KW-0805">Transcription regulation</keyword>
<keyword id="KW-0808">Transferase</keyword>
<keyword id="KW-0812">Transmembrane</keyword>
<keyword id="KW-1133">Transmembrane helix</keyword>
<keyword id="KW-0813">Transport</keyword>
<keyword id="KW-0832">Ubl conjugation</keyword>
<keyword id="KW-1161">Viral attachment to host cell</keyword>
<keyword id="KW-0261">Viral envelope protein</keyword>
<keyword id="KW-0899">Viral immunoevasion</keyword>
<keyword id="KW-1182">Viral ion channel</keyword>
<keyword id="KW-0543">Viral nucleoprotein</keyword>
<keyword id="KW-1162">Viral penetration into host cytoplasm</keyword>
<keyword id="KW-0693">Viral RNA replication</keyword>
<keyword id="KW-0946">Virion</keyword>
<keyword id="KW-1164">Virus endocytosis by host</keyword>
<keyword id="KW-1160">Virus entry into host cell</keyword>
<keyword id="KW-0862">Zinc</keyword>
<dbReference type="EC" id="3.4.22.-" evidence="4"/>
<dbReference type="EC" id="3.4.21.98" evidence="6"/>
<dbReference type="EC" id="3.6.1.15" evidence="6"/>
<dbReference type="EC" id="3.6.4.13" evidence="6"/>
<dbReference type="EC" id="2.7.7.48" evidence="6"/>
<dbReference type="EMBL" id="D14853">
    <property type="protein sequence ID" value="BAA03581.1"/>
    <property type="molecule type" value="Genomic_RNA"/>
</dbReference>
<dbReference type="PIR" id="PQ0804">
    <property type="entry name" value="PQ0804"/>
</dbReference>
<dbReference type="BMRB" id="Q81754"/>
<dbReference type="SMR" id="Q81754"/>
<dbReference type="MEROPS" id="S29.001"/>
<dbReference type="euHCVdb" id="D14853"/>
<dbReference type="Proteomes" id="UP000007417">
    <property type="component" value="Genome"/>
</dbReference>
<dbReference type="GO" id="GO:0044167">
    <property type="term" value="C:host cell endoplasmic reticulum membrane"/>
    <property type="evidence" value="ECO:0007669"/>
    <property type="project" value="UniProtKB-SubCell"/>
</dbReference>
<dbReference type="GO" id="GO:0044186">
    <property type="term" value="C:host cell lipid droplet"/>
    <property type="evidence" value="ECO:0007669"/>
    <property type="project" value="UniProtKB-SubCell"/>
</dbReference>
<dbReference type="GO" id="GO:0044191">
    <property type="term" value="C:host cell mitochondrial membrane"/>
    <property type="evidence" value="ECO:0007669"/>
    <property type="project" value="UniProtKB-SubCell"/>
</dbReference>
<dbReference type="GO" id="GO:0042025">
    <property type="term" value="C:host cell nucleus"/>
    <property type="evidence" value="ECO:0007669"/>
    <property type="project" value="UniProtKB-SubCell"/>
</dbReference>
<dbReference type="GO" id="GO:0044220">
    <property type="term" value="C:host cell perinuclear region of cytoplasm"/>
    <property type="evidence" value="ECO:0007669"/>
    <property type="project" value="UniProtKB-SubCell"/>
</dbReference>
<dbReference type="GO" id="GO:0020002">
    <property type="term" value="C:host cell plasma membrane"/>
    <property type="evidence" value="ECO:0007669"/>
    <property type="project" value="UniProtKB-SubCell"/>
</dbReference>
<dbReference type="GO" id="GO:0016020">
    <property type="term" value="C:membrane"/>
    <property type="evidence" value="ECO:0007669"/>
    <property type="project" value="UniProtKB-KW"/>
</dbReference>
<dbReference type="GO" id="GO:1990904">
    <property type="term" value="C:ribonucleoprotein complex"/>
    <property type="evidence" value="ECO:0007669"/>
    <property type="project" value="UniProtKB-KW"/>
</dbReference>
<dbReference type="GO" id="GO:0019031">
    <property type="term" value="C:viral envelope"/>
    <property type="evidence" value="ECO:0007669"/>
    <property type="project" value="UniProtKB-KW"/>
</dbReference>
<dbReference type="GO" id="GO:0019013">
    <property type="term" value="C:viral nucleocapsid"/>
    <property type="evidence" value="ECO:0007669"/>
    <property type="project" value="UniProtKB-KW"/>
</dbReference>
<dbReference type="GO" id="GO:0055036">
    <property type="term" value="C:virion membrane"/>
    <property type="evidence" value="ECO:0007669"/>
    <property type="project" value="UniProtKB-SubCell"/>
</dbReference>
<dbReference type="GO" id="GO:0005524">
    <property type="term" value="F:ATP binding"/>
    <property type="evidence" value="ECO:0007669"/>
    <property type="project" value="UniProtKB-KW"/>
</dbReference>
<dbReference type="GO" id="GO:0016887">
    <property type="term" value="F:ATP hydrolysis activity"/>
    <property type="evidence" value="ECO:0007669"/>
    <property type="project" value="RHEA"/>
</dbReference>
<dbReference type="GO" id="GO:0015267">
    <property type="term" value="F:channel activity"/>
    <property type="evidence" value="ECO:0007669"/>
    <property type="project" value="UniProtKB-KW"/>
</dbReference>
<dbReference type="GO" id="GO:0004197">
    <property type="term" value="F:cysteine-type endopeptidase activity"/>
    <property type="evidence" value="ECO:0007669"/>
    <property type="project" value="InterPro"/>
</dbReference>
<dbReference type="GO" id="GO:0003723">
    <property type="term" value="F:RNA binding"/>
    <property type="evidence" value="ECO:0007669"/>
    <property type="project" value="UniProtKB-KW"/>
</dbReference>
<dbReference type="GO" id="GO:0003724">
    <property type="term" value="F:RNA helicase activity"/>
    <property type="evidence" value="ECO:0007669"/>
    <property type="project" value="UniProtKB-EC"/>
</dbReference>
<dbReference type="GO" id="GO:0003968">
    <property type="term" value="F:RNA-directed RNA polymerase activity"/>
    <property type="evidence" value="ECO:0007669"/>
    <property type="project" value="UniProtKB-KW"/>
</dbReference>
<dbReference type="GO" id="GO:0004252">
    <property type="term" value="F:serine-type endopeptidase activity"/>
    <property type="evidence" value="ECO:0007669"/>
    <property type="project" value="InterPro"/>
</dbReference>
<dbReference type="GO" id="GO:0017124">
    <property type="term" value="F:SH3 domain binding"/>
    <property type="evidence" value="ECO:0007669"/>
    <property type="project" value="UniProtKB-KW"/>
</dbReference>
<dbReference type="GO" id="GO:0005198">
    <property type="term" value="F:structural molecule activity"/>
    <property type="evidence" value="ECO:0007669"/>
    <property type="project" value="InterPro"/>
</dbReference>
<dbReference type="GO" id="GO:0008270">
    <property type="term" value="F:zinc ion binding"/>
    <property type="evidence" value="ECO:0007669"/>
    <property type="project" value="InterPro"/>
</dbReference>
<dbReference type="GO" id="GO:0075512">
    <property type="term" value="P:clathrin-dependent endocytosis of virus by host cell"/>
    <property type="evidence" value="ECO:0007669"/>
    <property type="project" value="UniProtKB-KW"/>
</dbReference>
<dbReference type="GO" id="GO:0039654">
    <property type="term" value="P:fusion of virus membrane with host endosome membrane"/>
    <property type="evidence" value="ECO:0007669"/>
    <property type="project" value="UniProtKB-KW"/>
</dbReference>
<dbReference type="GO" id="GO:0034220">
    <property type="term" value="P:monoatomic ion transmembrane transport"/>
    <property type="evidence" value="ECO:0007669"/>
    <property type="project" value="UniProtKB-KW"/>
</dbReference>
<dbReference type="GO" id="GO:0006508">
    <property type="term" value="P:proteolysis"/>
    <property type="evidence" value="ECO:0007669"/>
    <property type="project" value="UniProtKB-KW"/>
</dbReference>
<dbReference type="GO" id="GO:0039520">
    <property type="term" value="P:symbiont-mediated activation of host autophagy"/>
    <property type="evidence" value="ECO:0007669"/>
    <property type="project" value="UniProtKB-KW"/>
</dbReference>
<dbReference type="GO" id="GO:0039645">
    <property type="term" value="P:symbiont-mediated perturbation of host cell cycle G1/S transition checkpoint"/>
    <property type="evidence" value="ECO:0007669"/>
    <property type="project" value="UniProtKB-KW"/>
</dbReference>
<dbReference type="GO" id="GO:0039545">
    <property type="term" value="P:symbiont-mediated suppression of host cytoplasmic pattern recognition receptor signaling pathway via inhibition of MAVS activity"/>
    <property type="evidence" value="ECO:0007669"/>
    <property type="project" value="UniProtKB-KW"/>
</dbReference>
<dbReference type="GO" id="GO:0039563">
    <property type="term" value="P:symbiont-mediated suppression of host JAK-STAT cascade via inhibition of STAT1 activity"/>
    <property type="evidence" value="ECO:0007669"/>
    <property type="project" value="UniProtKB-KW"/>
</dbReference>
<dbReference type="GO" id="GO:0039527">
    <property type="term" value="P:symbiont-mediated suppression of host TRAF-mediated signal transduction"/>
    <property type="evidence" value="ECO:0007669"/>
    <property type="project" value="UniProtKB-KW"/>
</dbReference>
<dbReference type="GO" id="GO:0039502">
    <property type="term" value="P:symbiont-mediated suppression of host type I interferon-mediated signaling pathway"/>
    <property type="evidence" value="ECO:0007669"/>
    <property type="project" value="UniProtKB-KW"/>
</dbReference>
<dbReference type="GO" id="GO:0019087">
    <property type="term" value="P:symbiont-mediated transformation of host cell"/>
    <property type="evidence" value="ECO:0007669"/>
    <property type="project" value="InterPro"/>
</dbReference>
<dbReference type="GO" id="GO:0039694">
    <property type="term" value="P:viral RNA genome replication"/>
    <property type="evidence" value="ECO:0007669"/>
    <property type="project" value="InterPro"/>
</dbReference>
<dbReference type="GO" id="GO:0019062">
    <property type="term" value="P:virion attachment to host cell"/>
    <property type="evidence" value="ECO:0007669"/>
    <property type="project" value="UniProtKB-KW"/>
</dbReference>
<dbReference type="CDD" id="cd20903">
    <property type="entry name" value="HCV_p7"/>
    <property type="match status" value="1"/>
</dbReference>
<dbReference type="CDD" id="cd23202">
    <property type="entry name" value="Hepacivirus_RdRp"/>
    <property type="match status" value="1"/>
</dbReference>
<dbReference type="CDD" id="cd18806">
    <property type="entry name" value="SF2_C_viral"/>
    <property type="match status" value="1"/>
</dbReference>
<dbReference type="FunFam" id="1.10.820.10:FF:000001">
    <property type="entry name" value="Genome polyprotein"/>
    <property type="match status" value="1"/>
</dbReference>
<dbReference type="FunFam" id="2.20.25.220:FF:000001">
    <property type="entry name" value="Genome polyprotein"/>
    <property type="match status" value="1"/>
</dbReference>
<dbReference type="FunFam" id="2.40.10.10:FF:000029">
    <property type="entry name" value="Genome polyprotein"/>
    <property type="match status" value="1"/>
</dbReference>
<dbReference type="FunFam" id="3.30.160.890:FF:000001">
    <property type="entry name" value="Genome polyprotein"/>
    <property type="match status" value="1"/>
</dbReference>
<dbReference type="FunFam" id="3.30.70.270:FF:000015">
    <property type="entry name" value="Genome polyprotein"/>
    <property type="match status" value="1"/>
</dbReference>
<dbReference type="FunFam" id="3.40.50.300:FF:000557">
    <property type="entry name" value="Genome polyprotein"/>
    <property type="match status" value="1"/>
</dbReference>
<dbReference type="FunFam" id="3.40.50.300:FF:000717">
    <property type="entry name" value="Genome polyprotein"/>
    <property type="match status" value="1"/>
</dbReference>
<dbReference type="FunFam" id="2.40.10.120:FF:000010">
    <property type="entry name" value="NS3 protease"/>
    <property type="match status" value="1"/>
</dbReference>
<dbReference type="Gene3D" id="2.40.10.120">
    <property type="match status" value="1"/>
</dbReference>
<dbReference type="Gene3D" id="3.30.70.270">
    <property type="match status" value="2"/>
</dbReference>
<dbReference type="Gene3D" id="6.10.250.1610">
    <property type="match status" value="1"/>
</dbReference>
<dbReference type="Gene3D" id="6.10.250.1750">
    <property type="match status" value="1"/>
</dbReference>
<dbReference type="Gene3D" id="6.10.250.2920">
    <property type="match status" value="1"/>
</dbReference>
<dbReference type="Gene3D" id="2.20.25.210">
    <property type="entry name" value="Hepatitis C NS5A, domain 1B"/>
    <property type="match status" value="1"/>
</dbReference>
<dbReference type="Gene3D" id="4.10.710.10">
    <property type="entry name" value="Hepatitis C Virus Capsid Protein, Chain A"/>
    <property type="match status" value="1"/>
</dbReference>
<dbReference type="Gene3D" id="3.30.160.890">
    <property type="entry name" value="Hepatitis C virus envelope glycoprotein E1, chain C"/>
    <property type="match status" value="1"/>
</dbReference>
<dbReference type="Gene3D" id="2.30.30.710">
    <property type="entry name" value="Hepatitis C virus non-structural protein NS2, C-terminal domain"/>
    <property type="match status" value="1"/>
</dbReference>
<dbReference type="Gene3D" id="1.20.1280.150">
    <property type="entry name" value="Hepatitis C virus non-structural protein NS2, N-terminal domain"/>
    <property type="match status" value="1"/>
</dbReference>
<dbReference type="Gene3D" id="2.20.25.220">
    <property type="entry name" value="Hepatitis C virus NS5A, 1B domain"/>
    <property type="match status" value="1"/>
</dbReference>
<dbReference type="Gene3D" id="3.40.50.300">
    <property type="entry name" value="P-loop containing nucleotide triphosphate hydrolases"/>
    <property type="match status" value="2"/>
</dbReference>
<dbReference type="Gene3D" id="1.10.820.10">
    <property type="entry name" value="RNA Helicase Chain A , domain 3"/>
    <property type="match status" value="1"/>
</dbReference>
<dbReference type="Gene3D" id="2.40.10.10">
    <property type="entry name" value="Trypsin-like serine proteases"/>
    <property type="match status" value="1"/>
</dbReference>
<dbReference type="InterPro" id="IPR043502">
    <property type="entry name" value="DNA/RNA_pol_sf"/>
</dbReference>
<dbReference type="InterPro" id="IPR011492">
    <property type="entry name" value="Flavi_DEAD"/>
</dbReference>
<dbReference type="InterPro" id="IPR002521">
    <property type="entry name" value="HCV_Core_C"/>
</dbReference>
<dbReference type="InterPro" id="IPR044896">
    <property type="entry name" value="HCV_core_chain_A"/>
</dbReference>
<dbReference type="InterPro" id="IPR002522">
    <property type="entry name" value="HCV_core_N"/>
</dbReference>
<dbReference type="InterPro" id="IPR002519">
    <property type="entry name" value="HCV_Env"/>
</dbReference>
<dbReference type="InterPro" id="IPR002531">
    <property type="entry name" value="HCV_NS1"/>
</dbReference>
<dbReference type="InterPro" id="IPR002518">
    <property type="entry name" value="HCV_NS2"/>
</dbReference>
<dbReference type="InterPro" id="IPR042205">
    <property type="entry name" value="HCV_NS2_C"/>
</dbReference>
<dbReference type="InterPro" id="IPR042209">
    <property type="entry name" value="HCV_NS2_N"/>
</dbReference>
<dbReference type="InterPro" id="IPR000745">
    <property type="entry name" value="HCV_NS4a"/>
</dbReference>
<dbReference type="InterPro" id="IPR001490">
    <property type="entry name" value="HCV_NS4b"/>
</dbReference>
<dbReference type="InterPro" id="IPR002868">
    <property type="entry name" value="HCV_NS5a"/>
</dbReference>
<dbReference type="InterPro" id="IPR013192">
    <property type="entry name" value="HCV_NS5A_1a"/>
</dbReference>
<dbReference type="InterPro" id="IPR013193">
    <property type="entry name" value="HCV_NS5a_1B_dom"/>
</dbReference>
<dbReference type="InterPro" id="IPR038568">
    <property type="entry name" value="HCV_NS5A_1B_sf"/>
</dbReference>
<dbReference type="InterPro" id="IPR024350">
    <property type="entry name" value="HCV_NS5a_C"/>
</dbReference>
<dbReference type="InterPro" id="IPR049913">
    <property type="entry name" value="HCV_p7"/>
</dbReference>
<dbReference type="InterPro" id="IPR014001">
    <property type="entry name" value="Helicase_ATP-bd"/>
</dbReference>
<dbReference type="InterPro" id="IPR001650">
    <property type="entry name" value="Helicase_C-like"/>
</dbReference>
<dbReference type="InterPro" id="IPR004109">
    <property type="entry name" value="HepC_NS3_protease"/>
</dbReference>
<dbReference type="InterPro" id="IPR054175">
    <property type="entry name" value="NS3_helicase_C"/>
</dbReference>
<dbReference type="InterPro" id="IPR038170">
    <property type="entry name" value="NS5A_1a_sf"/>
</dbReference>
<dbReference type="InterPro" id="IPR027417">
    <property type="entry name" value="P-loop_NTPase"/>
</dbReference>
<dbReference type="InterPro" id="IPR009003">
    <property type="entry name" value="Peptidase_S1_PA"/>
</dbReference>
<dbReference type="InterPro" id="IPR043504">
    <property type="entry name" value="Peptidase_S1_PA_chymotrypsin"/>
</dbReference>
<dbReference type="InterPro" id="IPR043128">
    <property type="entry name" value="Rev_trsase/Diguanyl_cyclase"/>
</dbReference>
<dbReference type="InterPro" id="IPR007094">
    <property type="entry name" value="RNA-dir_pol_PSvirus"/>
</dbReference>
<dbReference type="InterPro" id="IPR002166">
    <property type="entry name" value="RNA_pol_HCV"/>
</dbReference>
<dbReference type="Pfam" id="PF07652">
    <property type="entry name" value="Flavi_DEAD"/>
    <property type="match status" value="1"/>
</dbReference>
<dbReference type="Pfam" id="PF01543">
    <property type="entry name" value="HCV_capsid"/>
    <property type="match status" value="1"/>
</dbReference>
<dbReference type="Pfam" id="PF01542">
    <property type="entry name" value="HCV_core"/>
    <property type="match status" value="1"/>
</dbReference>
<dbReference type="Pfam" id="PF01539">
    <property type="entry name" value="HCV_env"/>
    <property type="match status" value="1"/>
</dbReference>
<dbReference type="Pfam" id="PF01560">
    <property type="entry name" value="HCV_NS1"/>
    <property type="match status" value="1"/>
</dbReference>
<dbReference type="Pfam" id="PF01538">
    <property type="entry name" value="HCV_NS2"/>
    <property type="match status" value="1"/>
</dbReference>
<dbReference type="Pfam" id="PF01006">
    <property type="entry name" value="HCV_NS4a"/>
    <property type="match status" value="1"/>
</dbReference>
<dbReference type="Pfam" id="PF01001">
    <property type="entry name" value="HCV_NS4b"/>
    <property type="match status" value="1"/>
</dbReference>
<dbReference type="Pfam" id="PF01506">
    <property type="entry name" value="HCV_NS5a"/>
    <property type="match status" value="1"/>
</dbReference>
<dbReference type="Pfam" id="PF08300">
    <property type="entry name" value="HCV_NS5a_1a"/>
    <property type="match status" value="1"/>
</dbReference>
<dbReference type="Pfam" id="PF08301">
    <property type="entry name" value="HCV_NS5a_1b"/>
    <property type="match status" value="1"/>
</dbReference>
<dbReference type="Pfam" id="PF12941">
    <property type="entry name" value="HCV_NS5a_C"/>
    <property type="match status" value="1"/>
</dbReference>
<dbReference type="Pfam" id="PF22027">
    <property type="entry name" value="NS3_helicase_C"/>
    <property type="match status" value="1"/>
</dbReference>
<dbReference type="Pfam" id="PF02907">
    <property type="entry name" value="Peptidase_S29"/>
    <property type="match status" value="1"/>
</dbReference>
<dbReference type="Pfam" id="PF00998">
    <property type="entry name" value="RdRP_3"/>
    <property type="match status" value="1"/>
</dbReference>
<dbReference type="SMART" id="SM00487">
    <property type="entry name" value="DEXDc"/>
    <property type="match status" value="1"/>
</dbReference>
<dbReference type="SUPFAM" id="SSF56672">
    <property type="entry name" value="DNA/RNA polymerases"/>
    <property type="match status" value="1"/>
</dbReference>
<dbReference type="SUPFAM" id="SSF52540">
    <property type="entry name" value="P-loop containing nucleoside triphosphate hydrolases"/>
    <property type="match status" value="2"/>
</dbReference>
<dbReference type="SUPFAM" id="SSF50494">
    <property type="entry name" value="Trypsin-like serine proteases"/>
    <property type="match status" value="1"/>
</dbReference>
<dbReference type="PROSITE" id="PS51693">
    <property type="entry name" value="HCV_NS2_PRO"/>
    <property type="match status" value="1"/>
</dbReference>
<dbReference type="PROSITE" id="PS51192">
    <property type="entry name" value="HELICASE_ATP_BIND_1"/>
    <property type="match status" value="1"/>
</dbReference>
<dbReference type="PROSITE" id="PS51194">
    <property type="entry name" value="HELICASE_CTER"/>
    <property type="match status" value="1"/>
</dbReference>
<dbReference type="PROSITE" id="PS51822">
    <property type="entry name" value="HV_PV_NS3_PRO"/>
    <property type="match status" value="1"/>
</dbReference>
<dbReference type="PROSITE" id="PS50507">
    <property type="entry name" value="RDRP_SSRNA_POS"/>
    <property type="match status" value="1"/>
</dbReference>
<evidence type="ECO:0000250" key="1"/>
<evidence type="ECO:0000250" key="2">
    <source>
        <dbReference type="UniProtKB" id="O92972"/>
    </source>
</evidence>
<evidence type="ECO:0000250" key="3">
    <source>
        <dbReference type="UniProtKB" id="P26662"/>
    </source>
</evidence>
<evidence type="ECO:0000250" key="4">
    <source>
        <dbReference type="UniProtKB" id="P26663"/>
    </source>
</evidence>
<evidence type="ECO:0000250" key="5">
    <source>
        <dbReference type="UniProtKB" id="P26664"/>
    </source>
</evidence>
<evidence type="ECO:0000250" key="6">
    <source>
        <dbReference type="UniProtKB" id="P27958"/>
    </source>
</evidence>
<evidence type="ECO:0000250" key="7">
    <source>
        <dbReference type="UniProtKB" id="P29846"/>
    </source>
</evidence>
<evidence type="ECO:0000250" key="8">
    <source>
        <dbReference type="UniProtKB" id="Q01403"/>
    </source>
</evidence>
<evidence type="ECO:0000250" key="9">
    <source>
        <dbReference type="UniProtKB" id="Q03463"/>
    </source>
</evidence>
<evidence type="ECO:0000250" key="10">
    <source>
        <dbReference type="UniProtKB" id="Q5EG65"/>
    </source>
</evidence>
<evidence type="ECO:0000250" key="11">
    <source>
        <dbReference type="UniProtKB" id="Q913V3"/>
    </source>
</evidence>
<evidence type="ECO:0000250" key="12">
    <source>
        <dbReference type="UniProtKB" id="Q99IB8"/>
    </source>
</evidence>
<evidence type="ECO:0000250" key="13">
    <source>
        <dbReference type="UniProtKB" id="Q9WMX2"/>
    </source>
</evidence>
<evidence type="ECO:0000255" key="14"/>
<evidence type="ECO:0000255" key="15">
    <source>
        <dbReference type="PROSITE-ProRule" id="PRU00539"/>
    </source>
</evidence>
<evidence type="ECO:0000255" key="16">
    <source>
        <dbReference type="PROSITE-ProRule" id="PRU00541"/>
    </source>
</evidence>
<evidence type="ECO:0000255" key="17">
    <source>
        <dbReference type="PROSITE-ProRule" id="PRU01030"/>
    </source>
</evidence>
<evidence type="ECO:0000255" key="18">
    <source>
        <dbReference type="PROSITE-ProRule" id="PRU01166"/>
    </source>
</evidence>
<evidence type="ECO:0000256" key="19">
    <source>
        <dbReference type="SAM" id="MobiDB-lite"/>
    </source>
</evidence>
<evidence type="ECO:0000305" key="20"/>
<comment type="function">
    <molecule>Mature core protein</molecule>
    <text evidence="3 5 6 7 12 20">Packages viral RNA to form a viral nucleocapsid, and promotes virion budding (Probable). Participates in the viral particle production as a result of its interaction with the non-structural protein 5A (By similarity). Binds RNA and may function as a RNA chaperone to induce the RNA structural rearrangements taking place during virus replication (By similarity). Modulates viral translation initiation by interacting with viral IRES and 40S ribosomal subunit (By similarity). Affects various cell signaling pathways, host immunity and lipid metabolism (Probable). Prevents the establishment of cellular antiviral state by blocking the interferon-alpha/beta (IFN-alpha/beta) and IFN-gamma signaling pathways and by blocking the formation of phosphorylated STAT1 and promoting ubiquitin-mediated proteasome-dependent degradation of STAT1 (By similarity). Activates STAT3 leading to cellular transformation (By similarity). Regulates the activity of cellular genes, including c-myc and c-fos (By similarity). May repress the promoter of p53, and sequester CREB3 and SP110 isoform 3/Sp110b in the cytoplasm (By similarity). Represses cell cycle negative regulating factor CDKN1A, thereby interrupting an important check point of normal cell cycle regulation (By similarity). Targets transcription factors involved in the regulation of inflammatory responses and in the immune response: suppresses TNF-induced NF-kappa-B activation, and activates AP-1 (By similarity). Binds to dendritic cells (DCs) via C1QR1, resulting in down-regulation of T-lymphocytes proliferation (By similarity). Alters lipid metabolism by interacting with hepatocellular proteins involved in lipid accumulation and storage (By similarity). Induces up-regulation of FAS promoter activity, and thereby contributes to the increased triglyceride accumulation in hepatocytes (steatosis) (By similarity).</text>
</comment>
<comment type="function">
    <molecule>Envelope glycoprotein E1</molecule>
    <text evidence="6">Forms a heterodimer with envelope glycoprotein E2, which mediates virus attachment to the host cell, virion internalization through clathrin-dependent endocytosis and fusion with host membrane (By similarity). Fusion with the host cell is most likely mediated by both E1 and E2, through conformational rearrangements of the heterodimer required for fusion rather than a classical class II fusion mechanism (By similarity). E1/E2 heterodimer binds host apolipoproteins such as APOB and ApoE thereby forming a lipo-viro-particle (LVP) (By similarity). APOE associated to the LVP allows the initial virus attachment to cell surface receptors such as the heparan sulfate proteoglycans (HSPGs), syndecan-1 (SDC1), syndecan-1 (SDC2), the low-density lipoprotein receptor (LDLR) and scavenger receptor class B type I (SCARB1) (By similarity). The cholesterol transfer activity of SCARB1 allows E2 exposure and binding of E2 to SCARB1 and the tetraspanin CD81 (By similarity). E1/E2 heterodimer binding on CD81 activates the epithelial growth factor receptor (EGFR) signaling pathway (By similarity). Diffusion of the complex E1-E2-EGFR-SCARB1-CD81 to the cell lateral membrane allows further interaction with Claudin 1 (CLDN1) and occludin (OCLN) to finally trigger HCV entry (By similarity).</text>
</comment>
<comment type="function">
    <molecule>Envelope glycoprotein E2</molecule>
    <text evidence="5 6">Forms a heterodimer with envelope glycoprotein E1, which mediates virus attachment to the host cell, virion internalization through clathrin-dependent endocytosis and fusion with host membrane (By similarity). Fusion with the host cell is most likely mediated by both E1 and E2, through conformational rearrangements of the heterodimer required for fusion rather than a classical class II fusion mechanism (By similarity). The interaction between envelope glycoprotein E2 and host apolipoprotein E/APOE allows the proper assembly, maturation and infectivity of the viral particles (By similarity). This interaction is probably promoted via the up-regulation of cellular autophagy by the virus (By similarity). E1/E2 heterodimer binds host apolipoproteins such as APOB and APOE thereby forming a lipo-viro-particle (LVP) (By similarity). APOE associated to the LVP allows the initial virus attachment to cell surface receptors such as the heparan sulfate proteoglycans (HSPGs), syndecan-1 (SDC1), syndecan-1 (SDC2), the low-density lipoprotein receptor (LDLR) and scavenger receptor class B type I (SCARB1) (By similarity). The cholesterol transfer activity of SCARB1 allows E2 exposure and binding of E2 to SCARB1 and the tetraspanin CD81 (By similarity). E1/E2 heterodimer binding on CD81 activates the epithelial growth factor receptor (EGFR) signaling pathway (By similarity). Diffusion of the complex E1-E2-EGFR-SCARB1-CD81 to the cell lateral membrane allows further interaction with Claudin 1 (CLDN1) and occludin (OCLN) to finally trigger HCV entry (By similarity). Inhibits host EIF2AK2/PKR activation, preventing the establishment of an antiviral state (By similarity). Viral ligand for CD209/DC-SIGN and CLEC4M/DC-SIGNR, which are respectively found on dendritic cells (DCs), and on liver sinusoidal endothelial cells and macrophage-like cells of lymph node sinuses (By similarity). These interactions allow the capture of circulating HCV particles by these cells and subsequent facilitated transmission to permissive cells such as hepatocytes and lymphocyte subpopulations (By similarity). The interaction between E2 and host amino acid transporter complex formed by SLC3A2 and SLC7A5/LAT1 may facilitate viral entry into host cell (By similarity).</text>
</comment>
<comment type="function">
    <molecule>Viroporin p7</molecule>
    <text evidence="6 12 20">Ion channel protein that acts as a viroporin and plays an essential role in the assembly, envelopment and secretion of viral particles (By similarity). Regulates the host cell secretory pathway, which induces the intracellular retention of viral glycoproteins and favors assembly of viral particles (By similarity). Creates a pore in acidic organelles and releases Ca(2+) and H(+) in the cytoplasm of infected cells, leading to a productive viral infection (By similarity). High levels of cytoplasmic Ca(2+) may trigger membrane trafficking and transport of viral ER-associated proteins to viroplasms, sites of viral genome replication (Probable). This ionic imbalance induces the assembly of the inflammasome complex, which triggers the maturation of pro-IL-1beta into IL-1beta through the action of caspase-1 (By similarity). Targets also host mitochondria and induces mitochondrial depolarization (By similarity). In addition of its role as a viroporin, acts as a lipid raft adhesion factor (By similarity).</text>
</comment>
<comment type="function">
    <molecule>Protease NS2</molecule>
    <text evidence="4 6">Cysteine protease required for the proteolytic auto-cleavage between the non-structural proteins NS2 and NS3 (By similarity). The N-terminus of NS3 is required for the function of NS2 protease (active region NS2-3) (By similarity). Promotes the initiation of viral particle assembly by mediating the interaction between structural and non-structural proteins (By similarity).</text>
</comment>
<comment type="function">
    <molecule>Serine protease/helicase NS3</molecule>
    <text evidence="6 13">Displays three enzymatic activities: serine protease with a chymotrypsin-like fold, NTPase and RNA helicase (By similarity). NS3 serine protease, in association with NS4A, is responsible for the cleavages of NS3-NS4A, NS4A-NS4B, NS4B-NS5A and NS5A-NS5B (By similarity). The NS3/NS4A complex prevents phosphorylation of host IRF3, thus preventing the establishment of dsRNA induced antiviral state (By similarity). The NS3/NS4A complex induces host amino acid transporter component SLC3A2, thus contributing to HCV propagation (By similarity). NS3 RNA helicase binds to RNA and unwinds both dsDNA and dsRNA in the 3' to 5' direction, and likely resolves RNA complicated stable secondary structures in the template strand (By similarity). Binds a single ATP and catalyzes the unzipping of a single base pair of dsRNA (By similarity). Inhibits host antiviral proteins TBK1 and IRF3 thereby preventing the establishment of an antiviral state (By similarity). Cleaves host MAVS/CARDIF thereby preventing the establishment of an antiviral state (By similarity). Cleaves host TICAM1/TRIF, thereby disrupting TLR3 signaling and preventing the establishment of an antiviral state (By similarity).</text>
</comment>
<comment type="function">
    <molecule>Non-structural protein 4B</molecule>
    <text evidence="6">Induces a specific membrane alteration that serves as a scaffold for the virus replication complex (By similarity). This membrane alteration gives rise to the so-called ER-derived membranous web that contains the replication complex (By similarity). NS4B self-interaction contributes to its function in membranous web formation (By similarity). Promotes host TRIF protein degradation in a CASP8-dependent manner thereby inhibiting host TLR3-mediated interferon signaling (By similarity). Disrupts the interaction between STING and TBK1 contributing to the inhibition of interferon signaling (By similarity).</text>
</comment>
<comment type="function">
    <molecule>Non-structural protein 5A</molecule>
    <text evidence="3 5 6 12 13">Phosphorylated protein that is indispensable for viral replication and assembly (By similarity). Both hypo- and hyperphosphorylated states are required for the viral life cycle (By similarity). The hyperphosphorylated form of NS5A is an inhibitor of viral replication (By similarity). Involved in RNA-binding and especially in binding to the viral genome (By similarity). Zinc is essential for RNA-binding (By similarity). Participates in the viral particle production as a result of its interaction with the mature viral core protein (By similarity). Its interaction with host VAPB may target the viral replication complex to vesicles (By similarity). Down-regulates viral IRES translation initiation (By similarity). Mediates interferon resistance, presumably by interacting with and inhibiting host EIF2AK2/PKR (By similarity). Prevents BIN1-induced apoptosis (By similarity). Acts as a transcriptional activator of some host genes important for viral replication when localized in the nucleus (By similarity). Via the interaction with host PACSIN2, modulates lipid droplet formation in order to promote virion assembly (By similarity). Modulates TNFRSF21/DR6 signaling pathway for viral propagation (By similarity).</text>
</comment>
<comment type="function">
    <molecule>RNA-directed RNA polymerase</molecule>
    <text evidence="6">RNA-dependent RNA polymerase that performs primer-template recognition and RNA synthesis during viral replication. Initiates RNA transcription/replication at a flavin adenine dinucleotide (FAD), resulting in a 5'- FAD cap on viral RNAs. In this way, recognition of viral 5' RNA by host pattern recognition receptors can be bypassed, thereby evading activation of antiviral pathways.</text>
</comment>
<comment type="catalytic activity">
    <molecule>Serine protease/helicase NS3</molecule>
    <reaction evidence="6">
        <text>Hydrolysis of four peptide bonds in the viral precursor polyprotein, commonly with Asp or Glu in the P6 position, Cys or Thr in P1 and Ser or Ala in P1'.</text>
        <dbReference type="EC" id="3.4.21.98"/>
    </reaction>
</comment>
<comment type="catalytic activity">
    <molecule>Serine protease/helicase NS3</molecule>
    <reaction evidence="6">
        <text>a ribonucleoside 5'-triphosphate + H2O = a ribonucleoside 5'-diphosphate + phosphate + H(+)</text>
        <dbReference type="Rhea" id="RHEA:23680"/>
        <dbReference type="ChEBI" id="CHEBI:15377"/>
        <dbReference type="ChEBI" id="CHEBI:15378"/>
        <dbReference type="ChEBI" id="CHEBI:43474"/>
        <dbReference type="ChEBI" id="CHEBI:57930"/>
        <dbReference type="ChEBI" id="CHEBI:61557"/>
        <dbReference type="EC" id="3.6.1.15"/>
    </reaction>
</comment>
<comment type="catalytic activity">
    <molecule>Serine protease/helicase NS3</molecule>
    <reaction evidence="6">
        <text>ATP + H2O = ADP + phosphate + H(+)</text>
        <dbReference type="Rhea" id="RHEA:13065"/>
        <dbReference type="ChEBI" id="CHEBI:15377"/>
        <dbReference type="ChEBI" id="CHEBI:15378"/>
        <dbReference type="ChEBI" id="CHEBI:30616"/>
        <dbReference type="ChEBI" id="CHEBI:43474"/>
        <dbReference type="ChEBI" id="CHEBI:456216"/>
        <dbReference type="EC" id="3.6.4.13"/>
    </reaction>
</comment>
<comment type="catalytic activity">
    <molecule>RNA-directed RNA polymerase</molecule>
    <reaction evidence="15">
        <text>RNA(n) + a ribonucleoside 5'-triphosphate = RNA(n+1) + diphosphate</text>
        <dbReference type="Rhea" id="RHEA:21248"/>
        <dbReference type="Rhea" id="RHEA-COMP:14527"/>
        <dbReference type="Rhea" id="RHEA-COMP:17342"/>
        <dbReference type="ChEBI" id="CHEBI:33019"/>
        <dbReference type="ChEBI" id="CHEBI:61557"/>
        <dbReference type="ChEBI" id="CHEBI:140395"/>
        <dbReference type="EC" id="2.7.7.48"/>
    </reaction>
</comment>
<comment type="cofactor">
    <molecule>Protease NS2</molecule>
    <cofactor evidence="4">
        <name>Zn(2+)</name>
        <dbReference type="ChEBI" id="CHEBI:29105"/>
    </cofactor>
    <text evidence="4">Activity of protease NS2 is dependent on zinc ions and completely inhibited by EDTA. This is probably due to the fact that NS2 protease activity needs NS3 N-terminus that binds a zinc atom (active region NS2-3).</text>
</comment>
<comment type="cofactor">
    <molecule>Serine protease/helicase NS3</molecule>
    <cofactor evidence="4">
        <name>Zn(2+)</name>
        <dbReference type="ChEBI" id="CHEBI:29105"/>
    </cofactor>
    <cofactor evidence="13">
        <name>Mg(2+)</name>
        <dbReference type="ChEBI" id="CHEBI:18420"/>
    </cofactor>
    <text evidence="4 13">Binds 1 zinc ion, which has a structural role (By similarity). The magnesium ion is essential for the helicase activity (By similarity).</text>
</comment>
<comment type="cofactor">
    <molecule>RNA-directed RNA polymerase</molecule>
    <cofactor evidence="4">
        <name>Mg(2+)</name>
        <dbReference type="ChEBI" id="CHEBI:18420"/>
    </cofactor>
    <text evidence="4">Binds 2 magnesium ion that constitute a dinuclear catalytic metal center.</text>
</comment>
<comment type="activity regulation">
    <text evidence="3 6">Inhibited by the antiviral drug hexamethylene amiloride (By similarity). Inhibition by amantadine appears to be genotype-dependent (By similarity). Also inhibited by long-alkyl-chain iminosugar derivatives (By similarity).</text>
</comment>
<comment type="activity regulation">
    <molecule>RNA-directed RNA polymerase</molecule>
    <text evidence="6">Activity is up-regulated by PRK2/PKN2-mediated phosphorylation.</text>
</comment>
<comment type="subunit">
    <molecule>Mature core protein</molecule>
    <text evidence="3 5 6 7 9 10 12">Homooligomer (By similarity). Interacts with E1 (via C-terminus) (By similarity). Interacts with the non-structural protein 5A (By similarity). Interacts (via N-terminus) with host STAT1 (via SH2 domain); this interaction results in decreased STAT1 phosphorylation and ubiquitin-mediated proteasome-dependent STAT1 degradation, leading to decreased IFN-stimulated gene transcription (By similarity). Interacts with host STAT3; this interaction constitutively activates STAT3 (By similarity). Interacts with host LTBR receptor (By similarity). Interacts with host TNFRSF1A receptor and possibly induces apoptosis (By similarity). Interacts with host HNRPK (By similarity). Interacts with host YWHAE (By similarity). Interacts with host UBE3A/E6AP (By similarity). Interacts with host DDX3X (By similarity). Interacts with host APOA2 (By similarity). Interacts with host RXRA protein (By similarity). Interacts with host SP110 isoform 3/Sp110b; this interaction sequesters the transcriptional corepressor SP110 away from the nucleus (By similarity). Interacts with host CREB3 nuclear transcription protein; this interaction triggers cell transformation (By similarity). Interacts with host ACY3 (By similarity). Interacts with host C1QR1 (By similarity). Interacts with host RBM24; this interaction, which enhances the interaction of the mature core protein with 5'-UTR, may inhibit viral translation and favor replication (By similarity). Interacts with host EIF2AK2/PKR; this interaction induces the autophosphorylation of EIF2AK2 (By similarity). Part of the viral assembly initiation complex composed of NS2, E1, E2, NS3, NS4A, NS5A and the mature core protein (By similarity).</text>
</comment>
<comment type="subunit">
    <molecule>Envelope glycoprotein E1</molecule>
    <text evidence="6 12">Forms a heterodimer with envelope glycoprotein E2 (By similarity). Interacts with mature core protein (By similarity). Interacts with protease NS2 (By similarity). The heterodimer E1/E2 interacts with host CLDN1; this interaction plays a role in viral entry into host cell (By similarity). Interacts with host SPSB2 (via C-terminus) (By similarity). Part of the viral assembly initiation complex composed of NS2, E1, E2, NS3, NS4A, NS5A and the mature core protein (By similarity). Interacts with host NEURL3; this interaction prevents E1 binding to glycoprotein E2 (By similarity).</text>
</comment>
<comment type="subunit">
    <molecule>Envelope glycoprotein E2</molecule>
    <text evidence="6 12 13">Forms a heterodimer with envelope glycoprotein E1 (By similarity). Interacts with host CD81 and SCARB1 receptors; these interactions play a role in viral entry into host cell (By similarity). Interacts with host EIF2AK2/PKR; this interaction inhibits EIF2AK2 and probably allows the virus to evade the innate immune response (By similarity). Interacts with host CD209/DC-SIGN and CLEC4M/DC-SIGNR (By similarity). Interact with host SPCS1; this interaction is essential for viral particle assembly (By similarity). Interacts with protease NS2 (By similarity). The heterodimer E1/E2 interacts with host CLDN1; this interaction plays a role in viral entry into host cell (By similarity). Part of the viral assembly initiation complex composed of NS2, E1, E2, NS3, NS4A, NS5A and the mature core protein (By similarity). Interacts with host SLC3A2/4F2hc; the interaction may facilitate viral entry into host cell (By similarity). Interacts with human PLSCR1 (By similarity).</text>
</comment>
<comment type="subunit">
    <molecule>Viroporin p7</molecule>
    <text evidence="2 6 12">Homohexamer (By similarity). Homoheptamer (By similarity). Interacts with protease NS2 (By similarity).</text>
</comment>
<comment type="subunit">
    <molecule>Protease NS2</molecule>
    <text evidence="6 12">Homodimer (By similarity). Interacts with host SPCS1; this interaction is essential for viral particle assembly (By similarity). Interacts with envelope glycoprotein E1 (By similarity). Interacts with envelope glycoprotein E2 (By similarity). Interacts with viroporin p7 (By similarity). Interacts with serine protease/helicase NS3 (By similarity). Part of the replication complex composed of NS2, NS3, NS4A, NS4B, NS5A and the RNA-directed RNA polymerase embedded in an ER-derived membranous web (By similarity). Part of the viral assembly initiation complex composed of NS2, E1, E2, NS3, NS4A, NS5A and the mature core protein (By similarity).</text>
</comment>
<comment type="subunit">
    <molecule>Serine protease/helicase NS3</molecule>
    <text evidence="4 6 12 13">Interacts with protease NS2 (By similarity). Interacts with non-structural protein 4A; this interaction stabilizes the folding of NS3 serine protease (By similarity). NS3-NS4A interaction is essential for NS3 activation and allows membrane anchorage of the latter (By similarity). NS3/NS4A complex also prevents phosphorylation of host IRF3, thus preventing the establishment of dsRNA induced antiviral state (By similarity). Interacts with host MAVS; this interaction leads to the cleavage and inhibition of host MAVS (By similarity). Interacts with host TICAM1; this interaction leads to the cleavage and inhibition of host TICAM1 (By similarity). Interacts with host TANK-binding kinase/TBK1; this interaction results in the inhibition of the association between TBK1 and IRF3, which leads to the inhibition of IRF3 activation (By similarity). Interacts with host RBM24 (By similarity). Part of the replication complex composed of NS2, NS3, NS4A, NS4B, NS5A and the RNA-directed RNA polymerase embedded in an ER-derived membranous web (By similarity). Part of the viral assembly initiation complex composed of NS2, E1, E2, NS3, NS4A, NS5A and the mature core protein (By similarity).</text>
</comment>
<comment type="subunit">
    <molecule>Non-structural protein 4A</molecule>
    <text evidence="3 4 6 12">Interacts with NS3 serine protease; this interaction stabilizes the folding of NS3 serine protease (By similarity). NS3-NS4A interaction is essential for NS3 activation and allows membrane anchorage of the latter (By similarity). Interacts with non-structural protein 5A (via N-terminus) (By similarity). Part of the replication complex composed of NS2, NS3, NS4A, NS4B, NS5A and the RNA-directed RNA polymerase embedded in an ER-derived membranous web (By similarity). Part of the viral assembly initiation complex composed of NS2, E1, E2, NS3, NS4A, NS5A and the mature core protein (By similarity).</text>
</comment>
<comment type="subunit">
    <molecule>Non-structural protein 4B</molecule>
    <text evidence="6 12">Homomultimer (By similarity). Interacts with non-structural protein NS5A (By similarity). Interacts with host PLA2G4C; this interaction likely initiates the recruitment of replication complexes to lipid droplets (By similarity). Interacts with host STING; this interaction disrupts the interaction between STING and TBK1 thereby suppressing the interferon signaling (By similarity). Part of the replication complex composed of NS2, NS3, NS4A, NS4B, NS5A and the RNA-directed RNA polymerase embedded in an ER-derived membranous web (By similarity).</text>
</comment>
<comment type="subunit">
    <molecule>Non-structural protein 5A</molecule>
    <text evidence="3 4 5 6 12">Monomer. Homodimer; dimerization is required for RNA-binding (By similarity). Interacts with the mature core protein (By similarity). Interacts (via N-terminus) with non-structural protein 4A (By similarity). Interacts with non-structural protein 4B. Interacts (via region D2) with RNA-directed RNA polymerase (By similarity). Part of the viral assembly initiation complex composed of NS2, E1, E2, NS3, NS4A, NS5A and the mature core protein (By similarity). Part of the replication complex composed of NS2, NS3, NS4A, NS4B, NS5A and the RNA-directed RNA polymerase embedded in an ER-derived membranous web (By similarity). Interacts with host GRB2 (By similarity). Interacts with host BIN1 (By similarity). Interacts with host PIK3R1 (By similarity). Interacts with host SRCAP (By similarity). Interacts with host FKBP8 (By similarity). Interacts (via C-terminus) with host VAPB (via MSP domain). Interacts with host EIF2AK2/PKR; this interaction leads to disruption of EIF2AK2 dimerization by NS5A and probably allows the virus to evade the innate immune response. Interacts (via N-terminus) with host PACSIN2 (via N-terminus); this interaction attenuates protein kinase C alpha-mediated phosphorylation of PACSIN2 by disrupting the interaction between PACSIN2 and PRKCA (By similarity). Interacts (via N-terminus) with host SRC kinase (via SH2 domain) (By similarity). Interacts with most Src-family kinases (By similarity). Interacts with host IFI27 and SKP2; promotes the ubiquitin-mediated proteasomal degradation of NS5A (By similarity). Interacts with host GPS2 (By similarity). Interacts with host TNFRSF21; this interaction allows the modulation by the virus of JNK, p38 MAPK, STAT3, and Akt signaling pathways in a DR6-dependent manner. Interacts (via N-terminus) with host CIDEB (via N-terminus); this interaction seems to regulate the association of HCV particles with APOE (By similarity). Interacts with host CHKA/Choline Kinase-alpha; CHKA bridges host PI4KA and NS5A and potentiates NS5A-stimulated PI4KA activity, which then facilitates the targeting of the ternary complex to the ER for viral replication (By similarity). Interacts with host SPSB2 (via C-terminus); this interaction targets NS5A for ubiquitination and degradation (By similarity). Interacts with host RAB18; this interaction may promote the association of NS5A and other replicase components with lipid droplets (By similarity). Interacts (via region D2) with host PPIA/CYPA; the interaction stimulates RNA-binding ability of NS5A and is dependent on the peptidyl-prolyl cis-trans isomerase activity of PPIA/CYPA. Interacts with host TRIM14; this interaction induces the degradation of NS5A (By similarity).</text>
</comment>
<comment type="subunit">
    <molecule>RNA-directed RNA polymerase</molecule>
    <text evidence="6">Homooligomer (By similarity). Interacts with non-structural protein 5A (By similarity). Interacts with host VAPB (By similarity). Interacts with host PRK2/PKN2 (By similarity). Interacts with host HNRNPA1 and SEPT6; these interactions facilitate viral replication (By similarity). Part of the replication complex composed of NS2, NS3, NS4A, NS4B, NS5A and the RNA-directed RNA polymerase (By similarity).</text>
</comment>
<comment type="subcellular location">
    <molecule>Core protein precursor</molecule>
    <subcellularLocation>
        <location evidence="5">Host endoplasmic reticulum membrane</location>
        <topology evidence="14">Single-pass membrane protein</topology>
    </subcellularLocation>
    <subcellularLocation>
        <location evidence="5">Host mitochondrion membrane</location>
        <topology evidence="14">Single-pass type I membrane protein</topology>
    </subcellularLocation>
    <text>The C-terminal transmembrane domain of the core protein precursor contains an ER signal leading the nascent polyprotein to the ER membrane.</text>
</comment>
<comment type="subcellular location">
    <molecule>Mature core protein</molecule>
    <subcellularLocation>
        <location evidence="12">Virion</location>
    </subcellularLocation>
    <subcellularLocation>
        <location evidence="12">Host cytoplasm</location>
    </subcellularLocation>
    <subcellularLocation>
        <location evidence="3">Host nucleus</location>
    </subcellularLocation>
    <subcellularLocation>
        <location evidence="12">Host lipid droplet</location>
    </subcellularLocation>
    <text evidence="6">Only a minor proportion of core protein is present in the nucleus (By similarity). Probably present on the surface of lipid droplets (By similarity).</text>
</comment>
<comment type="subcellular location">
    <molecule>Envelope glycoprotein E1</molecule>
    <subcellularLocation>
        <location evidence="20">Virion membrane</location>
        <topology evidence="20">Single-pass type I membrane protein</topology>
    </subcellularLocation>
    <subcellularLocation>
        <location>Host endoplasmic reticulum membrane</location>
        <topology evidence="6">Single-pass type I membrane protein</topology>
    </subcellularLocation>
    <text evidence="6">The C-terminal transmembrane domain acts as a signal sequence and forms a hairpin structure before cleavage by host signal peptidase (By similarity). After cleavage, the membrane sequence is retained at the C-terminus of the protein, serving as ER membrane anchor (By similarity). A reorientation of the second hydrophobic stretch occurs after cleavage producing a single reoriented transmembrane domain (By similarity). These events explain the final topology of the protein (By similarity).</text>
</comment>
<comment type="subcellular location">
    <molecule>Envelope glycoprotein E2</molecule>
    <subcellularLocation>
        <location evidence="20">Virion membrane</location>
        <topology evidence="20">Single-pass type I membrane protein</topology>
    </subcellularLocation>
    <subcellularLocation>
        <location>Host endoplasmic reticulum membrane</location>
        <topology evidence="6">Single-pass type I membrane protein</topology>
    </subcellularLocation>
    <subcellularLocation>
        <location evidence="13">Host lipid droplet</location>
    </subcellularLocation>
    <text evidence="6">The C-terminal transmembrane domain acts as a signal sequence and forms a hairpin structure before cleavage by host signal peptidase (By similarity). After cleavage, the membrane sequence is retained at the C-terminus of the protein, serving as ER membrane anchor (By similarity). A reorientation of the second hydrophobic stretch occurs after cleavage producing a single reoriented transmembrane domain (By similarity). These events explain the final topology of the protein (By similarity).</text>
</comment>
<comment type="subcellular location">
    <molecule>Viroporin p7</molecule>
    <subcellularLocation>
        <location evidence="6">Host endoplasmic reticulum membrane</location>
        <topology evidence="6">Multi-pass membrane protein</topology>
    </subcellularLocation>
    <subcellularLocation>
        <location evidence="6">Host mitochondrion</location>
    </subcellularLocation>
    <subcellularLocation>
        <location evidence="6">Host cell membrane</location>
    </subcellularLocation>
    <text evidence="6">The C-terminus of p7 membrane domain acts as a signal sequence (By similarity). After cleavage by host signal peptidase, the membrane sequence is retained at the C-terminus of the protein, serving as ER membrane anchor (By similarity). ER retention of p7 is leaky and a small fraction reaches the plasma membrane (By similarity).</text>
</comment>
<comment type="subcellular location">
    <molecule>Protease NS2</molecule>
    <subcellularLocation>
        <location evidence="6">Host endoplasmic reticulum membrane</location>
        <topology evidence="6">Multi-pass membrane protein</topology>
    </subcellularLocation>
    <subcellularLocation>
        <location evidence="13">Host lipid droplet</location>
    </subcellularLocation>
    <text evidence="12">Probably present on the surface of lipid droplets.</text>
</comment>
<comment type="subcellular location">
    <molecule>Serine protease/helicase NS3</molecule>
    <subcellularLocation>
        <location evidence="20">Host endoplasmic reticulum membrane</location>
        <topology evidence="20">Peripheral membrane protein</topology>
    </subcellularLocation>
    <text evidence="20">NS3 is associated to the ER membrane through its binding to NS4A.</text>
</comment>
<comment type="subcellular location">
    <molecule>Non-structural protein 4A</molecule>
    <subcellularLocation>
        <location evidence="20">Host endoplasmic reticulum membrane</location>
        <topology evidence="20">Single-pass type I membrane protein</topology>
    </subcellularLocation>
    <text>Host membrane insertion occurs after processing by the NS3 protease.</text>
</comment>
<comment type="subcellular location">
    <molecule>Non-structural protein 4B</molecule>
    <subcellularLocation>
        <location evidence="6">Host endoplasmic reticulum membrane</location>
        <topology evidence="6">Multi-pass membrane protein</topology>
    </subcellularLocation>
    <text evidence="6">A reorientation of the N-terminus into the ER lumen occurs post-translationally.</text>
</comment>
<comment type="subcellular location">
    <molecule>Non-structural protein 5A</molecule>
    <subcellularLocation>
        <location evidence="6">Host endoplasmic reticulum membrane</location>
        <topology evidence="6">Peripheral membrane protein</topology>
    </subcellularLocation>
    <subcellularLocation>
        <location evidence="6">Host cytoplasm</location>
        <location evidence="6">Host perinuclear region</location>
    </subcellularLocation>
    <subcellularLocation>
        <location evidence="3">Host mitochondrion</location>
    </subcellularLocation>
    <subcellularLocation>
        <location evidence="6">Host cytoplasm</location>
    </subcellularLocation>
    <subcellularLocation>
        <location evidence="3">Host nucleus</location>
    </subcellularLocation>
    <subcellularLocation>
        <location evidence="13">Host lipid droplet</location>
    </subcellularLocation>
    <text evidence="3 6">Host membrane insertion occurs after processing by the NS3 protease (By similarity). Localizes at the surface of lipid droplets (By similarity).</text>
</comment>
<comment type="subcellular location">
    <molecule>RNA-directed RNA polymerase</molecule>
    <subcellularLocation>
        <location evidence="6">Host cytoplasm</location>
    </subcellularLocation>
    <subcellularLocation>
        <location>Host endoplasmic reticulum membrane</location>
        <topology evidence="6">Single-pass type IV membrane protein</topology>
    </subcellularLocation>
    <text evidence="6">Host membrane insertion occurs after processing by the NS3 protease.</text>
</comment>
<comment type="domain">
    <molecule>Envelope glycoprotein E1</molecule>
    <text evidence="6">The transmembrane regions of envelope E1 and E2 glycoproteins are involved in heterodimer formation, ER localization, and assembly of these proteins.</text>
</comment>
<comment type="domain">
    <molecule>Envelope glycoprotein E2</molecule>
    <text evidence="4 6">The transmembrane regions of envelope E1 and E2 glycoproteins are involved in heterodimer formation, ER localization, and assembly of these proteins (By similarity). Envelope E2 glycoprotein contain two highly variable regions called hypervariable region 1 and 2 (HVR1 and HVR2) (By similarity). E2 also contain two segments involved in CD81-binding (By similarity). HVR1 is implicated in the SCARB1-mediated cell entry and probably acts as a regulator of the association of particles with lipids (By similarity).</text>
</comment>
<comment type="domain">
    <molecule>Protease NS2</molecule>
    <text evidence="4">The N-terminus of NS3 is required for the catalytic activity of protease NS2 (By similarity). The minimal catalytic region includes the C-terminus of NS2 and the N-terminus NS3 protease domain (active region NS2-3) (By similarity).</text>
</comment>
<comment type="domain">
    <molecule>Serine protease/helicase NS3</molecule>
    <text evidence="3 6">The N-terminal one-third contains the protease activity (By similarity). This region contains a zinc atom that does not belong to the active site, but may play a structural rather than a catalytic role (By similarity). This region is essential for the activity of protease NS2, maybe by contributing to the folding of the latter (By similarity). The NTPase/helicase activity is located in the twothirds C-terminus of NS3, this domain contains the NTPase and RNA-binding regions (By similarity).</text>
</comment>
<comment type="domain">
    <molecule>Non-structural protein 4B</molecule>
    <text evidence="12">Contains a glycine zipper region that critically contributes to the biogenesis of functional ER-derived replication organelles.</text>
</comment>
<comment type="domain">
    <molecule>Non-structural protein 5A</molecule>
    <text evidence="3 6">The N-terminus of NS5A acts as membrane anchor (By similarity). The central part of NS5A contains a variable region called interferon sensitivity determining region (ISDR) and seems to be intrinsically disordered and interacts with NS5B and host EIF2AK2 (By similarity). The C-terminus of NS5A contains a variable region called variable region 3 (V3) (By similarity). ISDR and V3 may be involved in sensitivity and/or resistance to IFN-alpha therapy (By similarity). The C-terminus contains a nuclear localization signal (By similarity). The SH3-binding domain is involved in the interaction with host BIN1, GRB2 and Src-family kinases (By similarity).</text>
</comment>
<comment type="PTM">
    <molecule>Genome polyprotein</molecule>
    <text evidence="5 6">Specific enzymatic cleavages in vivo yield mature proteins (By similarity). The structural proteins, core, E1, E2 and p7 are produced by proteolytic processing by host signal peptidases (By similarity). The core protein precursor is synthesized as a 23 kDa, which is retained in the ER membrane through the hydrophobic signal peptide (By similarity). Cleavage by the signal peptidase releases the 21 kDa mature core protein (By similarity). The cleavage of the core protein precursor occurs between aminoacids 176 and 188 but the exact cleavage site is not known (By similarity). Some degraded forms of the core protein appear as well during the course of infection (By similarity). The other proteins (p7, NS2, NS3, NS4A, NS4B, NS5A and NS5B) are cleaved by the viral proteases (By similarity). Autoprocessing between NS2 and NS3 is mediated by the NS2 cysteine protease catalytic domain and regulated by the NS3 N-terminal domain (By similarity).</text>
</comment>
<comment type="PTM">
    <molecule>Mature core protein</molecule>
    <text evidence="8">Phosphorylated by host PKC and PKA.</text>
</comment>
<comment type="PTM">
    <molecule>Mature core protein</molecule>
    <text evidence="9">Ubiquitinated; mediated by UBE3A and leading to core protein subsequent proteasomal degradation.</text>
</comment>
<comment type="PTM">
    <molecule>Envelope glycoprotein E1</molecule>
    <text evidence="6">Highly N-glycosylated.</text>
</comment>
<comment type="PTM">
    <molecule>Envelope glycoprotein E2</molecule>
    <text evidence="6">Highly N-glycosylated.</text>
</comment>
<comment type="PTM">
    <molecule>Protease NS2</molecule>
    <text evidence="6">Palmitoylation is required for NS2/3 autoprocessing and E2 recruitment to membranes.</text>
</comment>
<comment type="PTM">
    <molecule>Non-structural protein 4B</molecule>
    <text evidence="6">Palmitoylated. This modification may play a role in its polymerization or in protein-protein interactions.</text>
</comment>
<comment type="PTM">
    <molecule>Non-structural protein 5A</molecule>
    <text evidence="3 5">Phosphorylated on serines in a basal form termed p56 (By similarity). p58 is a hyperphosphorylated form of p56 (By similarity). p56 and p58 coexist in the cell in roughly equivalent amounts (By similarity). Hyperphosphorylation is dependent on the presence of NS4A (By similarity). Host CSNK1A1/CKI-alpha or RPS6KB1 kinases may be responsible for NS5A phosphorylation (By similarity).</text>
</comment>
<comment type="PTM">
    <molecule>Non-structural protein 5A</molecule>
    <text evidence="12">Tyrosine phosphorylation is essential for the interaction with host SRC.</text>
</comment>
<comment type="PTM">
    <molecule>RNA-directed RNA polymerase</molecule>
    <text evidence="3">The N-terminus is phosphorylated by host PRK2/PKN2.</text>
</comment>
<comment type="miscellaneous">
    <text evidence="20">Viral particle assembly takes place at the surface of ER-derived membranes in close proximity to lipid droplets. NS2 associates with E1/E2 glycoproteins, NS3 and NS5A, which interacts with the viral RNA and core protein to promote genome encapsidation. The nucleocapsid buds at the ER membrane where E1/E2 glycoproteins are anchored and afterward associate with nascent lipid droplet to acquire APOE and APOC. Secretion of viral particles is probably regulated by viroporin p7.</text>
</comment>
<comment type="miscellaneous">
    <molecule>Non-structural protein 5A</molecule>
    <text evidence="20">Cell culture adaptation of the virus leads to mutations in NS5A, reducing its inhibitory effect on replication.</text>
</comment>
<comment type="miscellaneous">
    <molecule>Mature core protein</molecule>
    <text evidence="3">Exerts viral interference on hepatitis B virus when HCV and HBV coinfect the same cell, by suppressing HBV gene expression, RNA encapsidation and budding.</text>
</comment>
<comment type="similarity">
    <text evidence="20">Belongs to the hepacivirus polyprotein family.</text>
</comment>
<comment type="caution">
    <text evidence="20">The core gene probably also codes for alternative reading frame proteins (ARFPs). Many functions depicted for the core protein might belong to the ARFPs.</text>
</comment>
<reference key="1">
    <citation type="journal article" date="1994" name="J. Gen. Virol.">
        <title>The entire nucleotide sequence and classification of a hepatitis C virus isolate of a novel genotype from an Indonesian patient with chronic liver disease.</title>
        <authorList>
            <person name="Okamoto H."/>
            <person name="Kojima M."/>
            <person name="Sakamoto M."/>
            <person name="Iizuka H."/>
            <person name="Hadiwandowo S."/>
            <person name="Suwignyo S."/>
            <person name="Miyakawa Y."/>
            <person name="Mayumi M."/>
        </authorList>
    </citation>
    <scope>NUCLEOTIDE SEQUENCE [GENOMIC RNA]</scope>
</reference>
<reference key="2">
    <citation type="journal article" date="2000" name="J. Viral Hepat.">
        <title>Properties of the hepatitis C virus core protein: a structural protein that modulates cellular processes.</title>
        <authorList>
            <person name="McLauchlan J."/>
        </authorList>
    </citation>
    <scope>REVIEW</scope>
</reference>
<reference key="3">
    <citation type="journal article" date="2004" name="Hepatology">
        <title>Structural biology of hepatitis C virus.</title>
        <authorList>
            <person name="Penin F."/>
            <person name="Dubuisson J."/>
            <person name="Rey F.A."/>
            <person name="Moradpour D."/>
            <person name="Pawlotsky J.-M."/>
        </authorList>
    </citation>
    <scope>REVIEW</scope>
</reference>
<feature type="initiator methionine" description="Removed; by host" evidence="5">
    <location>
        <position position="1"/>
    </location>
</feature>
<feature type="chain" id="PRO_0000450907" description="Genome polyprotein">
    <location>
        <begin position="2"/>
        <end position="3011"/>
    </location>
</feature>
<feature type="chain" id="PRO_0000045568" description="Core protein precursor">
    <location>
        <begin position="2"/>
        <end position="191"/>
    </location>
</feature>
<feature type="chain" id="PRO_0000045569" description="Mature core protein">
    <location>
        <begin position="2"/>
        <end position="177"/>
    </location>
</feature>
<feature type="propeptide" id="PRO_0000045570" description="ER anchor for the core protein, removed in mature form by host signal peptidase">
    <location>
        <begin position="178"/>
        <end position="191"/>
    </location>
</feature>
<feature type="chain" id="PRO_0000045571" description="Envelope glycoprotein E1">
    <location>
        <begin position="192"/>
        <end position="383"/>
    </location>
</feature>
<feature type="chain" id="PRO_0000045572" description="Envelope glycoprotein E2">
    <location>
        <begin position="384"/>
        <end position="746"/>
    </location>
</feature>
<feature type="chain" id="PRO_0000045573" description="Viroporin p7">
    <location>
        <begin position="747"/>
        <end position="809"/>
    </location>
</feature>
<feature type="chain" id="PRO_0000045574" description="Protease NS2" evidence="17">
    <location>
        <begin position="810"/>
        <end position="1026"/>
    </location>
</feature>
<feature type="chain" id="PRO_0000045575" description="Serine protease/helicase NS3">
    <location>
        <begin position="1027"/>
        <end position="1657"/>
    </location>
</feature>
<feature type="chain" id="PRO_0000045576" description="Non-structural protein 4A">
    <location>
        <begin position="1658"/>
        <end position="1711"/>
    </location>
</feature>
<feature type="chain" id="PRO_0000045577" description="Non-structural protein 4B">
    <location>
        <begin position="1712"/>
        <end position="1972"/>
    </location>
</feature>
<feature type="chain" id="PRO_0000045578" description="Non-structural protein 5A">
    <location>
        <begin position="1973"/>
        <end position="2420"/>
    </location>
</feature>
<feature type="chain" id="PRO_0000045579" description="RNA-directed RNA polymerase">
    <location>
        <begin position="2421"/>
        <end position="3011"/>
    </location>
</feature>
<feature type="topological domain" description="Cytoplasmic" evidence="14">
    <location>
        <begin position="2"/>
        <end position="168"/>
    </location>
</feature>
<feature type="transmembrane region" description="Helical" evidence="14">
    <location>
        <begin position="169"/>
        <end position="189"/>
    </location>
</feature>
<feature type="topological domain" description="Lumenal" evidence="6">
    <location>
        <begin position="190"/>
        <end position="358"/>
    </location>
</feature>
<feature type="transmembrane region" description="Helical" evidence="6">
    <location>
        <begin position="359"/>
        <end position="379"/>
    </location>
</feature>
<feature type="topological domain" description="Lumenal" evidence="6">
    <location>
        <begin position="380"/>
        <end position="725"/>
    </location>
</feature>
<feature type="transmembrane region" description="Helical" evidence="6">
    <location>
        <begin position="726"/>
        <end position="746"/>
    </location>
</feature>
<feature type="topological domain" description="Lumenal" evidence="6">
    <location>
        <begin position="747"/>
        <end position="757"/>
    </location>
</feature>
<feature type="transmembrane region" description="Helical" evidence="6">
    <location>
        <begin position="758"/>
        <end position="778"/>
    </location>
</feature>
<feature type="topological domain" description="Cytoplasmic" evidence="6">
    <location>
        <begin position="779"/>
        <end position="781"/>
    </location>
</feature>
<feature type="transmembrane region" description="Helical" evidence="6">
    <location>
        <begin position="782"/>
        <end position="803"/>
    </location>
</feature>
<feature type="topological domain" description="Lumenal" evidence="6">
    <location>
        <begin position="804"/>
        <end position="813"/>
    </location>
</feature>
<feature type="transmembrane region" description="Helical" evidence="13">
    <location>
        <begin position="814"/>
        <end position="834"/>
    </location>
</feature>
<feature type="topological domain" description="Cytoplasmic" evidence="13">
    <location>
        <begin position="835"/>
        <end position="838"/>
    </location>
</feature>
<feature type="transmembrane region" description="Helical" evidence="13">
    <location>
        <begin position="839"/>
        <end position="859"/>
    </location>
</feature>
<feature type="topological domain" description="Lumenal" evidence="13">
    <location>
        <begin position="860"/>
        <end position="881"/>
    </location>
</feature>
<feature type="transmembrane region" description="Helical" evidence="13">
    <location>
        <begin position="882"/>
        <end position="902"/>
    </location>
</feature>
<feature type="topological domain" description="Cytoplasmic" evidence="13">
    <location>
        <begin position="903"/>
        <end position="1657"/>
    </location>
</feature>
<feature type="transmembrane region" description="Helical" evidence="14">
    <location>
        <begin position="1658"/>
        <end position="1678"/>
    </location>
</feature>
<feature type="topological domain" description="Cytoplasmic" evidence="14">
    <location>
        <begin position="1679"/>
        <end position="1805"/>
    </location>
</feature>
<feature type="transmembrane region" description="Helical" evidence="14">
    <location>
        <begin position="1806"/>
        <end position="1824"/>
    </location>
</feature>
<feature type="topological domain" description="Lumenal" evidence="6">
    <location>
        <begin position="1825"/>
        <end position="1828"/>
    </location>
</feature>
<feature type="transmembrane region" description="Helical" evidence="14">
    <location>
        <begin position="1829"/>
        <end position="1849"/>
    </location>
</feature>
<feature type="topological domain" description="Cytoplasmic" evidence="14">
    <location>
        <position position="1850"/>
    </location>
</feature>
<feature type="transmembrane region" description="Helical" evidence="14">
    <location>
        <begin position="1851"/>
        <end position="1871"/>
    </location>
</feature>
<feature type="topological domain" description="Lumenal" evidence="14">
    <location>
        <begin position="1872"/>
        <end position="1881"/>
    </location>
</feature>
<feature type="transmembrane region" description="Helical" evidence="14">
    <location>
        <begin position="1882"/>
        <end position="1902"/>
    </location>
</feature>
<feature type="topological domain" description="Cytoplasmic" evidence="14">
    <location>
        <begin position="1903"/>
        <end position="1972"/>
    </location>
</feature>
<feature type="intramembrane region" evidence="6">
    <location>
        <begin position="1973"/>
        <end position="2002"/>
    </location>
</feature>
<feature type="topological domain" description="Cytoplasmic" evidence="6">
    <location>
        <begin position="2003"/>
        <end position="2990"/>
    </location>
</feature>
<feature type="transmembrane region" description="Helical" evidence="6">
    <location>
        <begin position="2991"/>
        <end position="3011"/>
    </location>
</feature>
<feature type="domain" description="Peptidase C18" evidence="17">
    <location>
        <begin position="903"/>
        <end position="1026"/>
    </location>
</feature>
<feature type="domain" description="Peptidase S29" evidence="18">
    <location>
        <begin position="1027"/>
        <end position="1208"/>
    </location>
</feature>
<feature type="domain" description="Helicase ATP-binding" evidence="16">
    <location>
        <begin position="1217"/>
        <end position="1369"/>
    </location>
</feature>
<feature type="domain" description="RdRp catalytic" evidence="15">
    <location>
        <begin position="2634"/>
        <end position="2752"/>
    </location>
</feature>
<feature type="region of interest" description="Disordered" evidence="6">
    <location>
        <begin position="2"/>
        <end position="75"/>
    </location>
</feature>
<feature type="region of interest" description="Interaction with DDX3X" evidence="10">
    <location>
        <begin position="2"/>
        <end position="59"/>
    </location>
</feature>
<feature type="region of interest" description="Interaction with EIF2AK2/PKR" evidence="3">
    <location>
        <begin position="2"/>
        <end position="58"/>
    </location>
</feature>
<feature type="region of interest" description="Interaction with STAT1" evidence="3">
    <location>
        <begin position="2"/>
        <end position="23"/>
    </location>
</feature>
<feature type="region of interest" description="Important for endoplasmic reticulum and mitochondrial localization" evidence="3">
    <location>
        <begin position="112"/>
        <end position="152"/>
    </location>
</feature>
<feature type="region of interest" description="Interaction with APOA2" evidence="7">
    <location>
        <begin position="122"/>
        <end position="173"/>
    </location>
</feature>
<feature type="region of interest" description="Important for lipid droplets localization" evidence="6">
    <location>
        <begin position="164"/>
        <end position="167"/>
    </location>
</feature>
<feature type="region of interest" description="Important for fusion" evidence="6">
    <location>
        <begin position="265"/>
        <end position="296"/>
    </location>
</feature>
<feature type="region of interest" description="HVR1" evidence="6">
    <location>
        <begin position="385"/>
        <end position="411"/>
    </location>
</feature>
<feature type="region of interest" description="HVR2" evidence="6">
    <location>
        <begin position="474"/>
        <end position="479"/>
    </location>
</feature>
<feature type="region of interest" description="CD81-binding 1" evidence="4">
    <location>
        <begin position="480"/>
        <end position="493"/>
    </location>
</feature>
<feature type="region of interest" description="CD81-binding 2" evidence="4">
    <location>
        <begin position="544"/>
        <end position="551"/>
    </location>
</feature>
<feature type="region of interest" description="PKR/eIF2-alpha phosphorylation homology domain (PePHD)" evidence="1">
    <location>
        <begin position="660"/>
        <end position="671"/>
    </location>
</feature>
<feature type="region of interest" description="Protease NS2-3" evidence="4">
    <location>
        <begin position="904"/>
        <end position="1206"/>
    </location>
</feature>
<feature type="region of interest" description="Interaction with host SCPS1" evidence="12">
    <location>
        <begin position="929"/>
        <end position="949"/>
    </location>
</feature>
<feature type="region of interest" description="RNA-binding" evidence="4">
    <location>
        <begin position="1486"/>
        <end position="1497"/>
    </location>
</feature>
<feature type="region of interest" description="NS3-binding" evidence="6">
    <location>
        <begin position="1679"/>
        <end position="1690"/>
    </location>
</feature>
<feature type="region of interest" description="Transcriptional activation" evidence="14">
    <location>
        <begin position="2120"/>
        <end position="2332"/>
    </location>
</feature>
<feature type="region of interest" description="FKBP8-binding" evidence="3">
    <location>
        <begin position="2120"/>
        <end position="2208"/>
    </location>
</feature>
<feature type="region of interest" description="Interaction with non-structural protein 4A" evidence="3">
    <location>
        <begin position="2135"/>
        <end position="2139"/>
    </location>
</feature>
<feature type="region of interest" description="Interaction with host SKP2" evidence="6">
    <location>
        <begin position="2189"/>
        <end position="2441"/>
    </location>
</feature>
<feature type="region of interest" description="Interaction with EIF2AK2/PKR" evidence="4">
    <location>
        <begin position="2210"/>
        <end position="2275"/>
    </location>
</feature>
<feature type="region of interest" description="ISDR" evidence="3">
    <location>
        <begin position="2210"/>
        <end position="2249"/>
    </location>
</feature>
<feature type="region of interest" description="NS4B-binding" evidence="14">
    <location>
        <begin position="2249"/>
        <end position="2306"/>
    </location>
</feature>
<feature type="region of interest" description="Disordered" evidence="19">
    <location>
        <begin position="2352"/>
        <end position="2409"/>
    </location>
</feature>
<feature type="region of interest" description="V3" evidence="1">
    <location>
        <begin position="2354"/>
        <end position="2377"/>
    </location>
</feature>
<feature type="short sequence motif" description="Nuclear localization signal" evidence="12">
    <location>
        <begin position="5"/>
        <end position="13"/>
    </location>
</feature>
<feature type="short sequence motif" description="Nuclear localization signal" evidence="12">
    <location>
        <begin position="38"/>
        <end position="43"/>
    </location>
</feature>
<feature type="short sequence motif" description="Nuclear localization signal" evidence="12">
    <location>
        <begin position="58"/>
        <end position="64"/>
    </location>
</feature>
<feature type="short sequence motif" description="Nuclear localization signal" evidence="12">
    <location>
        <begin position="66"/>
        <end position="71"/>
    </location>
</feature>
<feature type="short sequence motif" description="DECH box" evidence="12">
    <location>
        <begin position="1316"/>
        <end position="1319"/>
    </location>
</feature>
<feature type="short sequence motif" description="SH3-binding" evidence="14">
    <location>
        <begin position="2322"/>
        <end position="2325"/>
    </location>
</feature>
<feature type="short sequence motif" description="Nuclear localization signal" evidence="3">
    <location>
        <begin position="2326"/>
        <end position="2334"/>
    </location>
</feature>
<feature type="compositionally biased region" description="Basic residues" evidence="19">
    <location>
        <begin position="7"/>
        <end position="16"/>
    </location>
</feature>
<feature type="compositionally biased region" description="Basic residues" evidence="19">
    <location>
        <begin position="58"/>
        <end position="68"/>
    </location>
</feature>
<feature type="compositionally biased region" description="Low complexity" evidence="19">
    <location>
        <begin position="2352"/>
        <end position="2373"/>
    </location>
</feature>
<feature type="active site" description="For protease NS2 activity; shared with dimeric partner" evidence="17">
    <location>
        <position position="952"/>
    </location>
</feature>
<feature type="active site" description="For protease NS2 activity; shared with dimeric partner" evidence="17">
    <location>
        <position position="972"/>
    </location>
</feature>
<feature type="active site" description="For protease NS2 activity; shared with dimeric partner" evidence="17">
    <location>
        <position position="993"/>
    </location>
</feature>
<feature type="active site" description="Charge relay system; for serine protease NS3 activity" evidence="18">
    <location>
        <position position="1083"/>
    </location>
</feature>
<feature type="active site" description="Charge relay system; for serine protease NS3 activity" evidence="18">
    <location>
        <position position="1107"/>
    </location>
</feature>
<feature type="active site" description="Charge relay system; for serine protease NS3 activity" evidence="18">
    <location>
        <position position="1165"/>
    </location>
</feature>
<feature type="binding site" evidence="18">
    <location>
        <position position="1123"/>
    </location>
    <ligand>
        <name>Zn(2+)</name>
        <dbReference type="ChEBI" id="CHEBI:29105"/>
        <label>1</label>
        <note>structural; for NS3 protease activity and NS2/3 auto-cleavage activity</note>
    </ligand>
</feature>
<feature type="binding site" evidence="18">
    <location>
        <position position="1125"/>
    </location>
    <ligand>
        <name>Zn(2+)</name>
        <dbReference type="ChEBI" id="CHEBI:29105"/>
        <label>1</label>
        <note>structural; for NS3 protease activity and NS2/3 auto-cleavage activity</note>
    </ligand>
</feature>
<feature type="binding site" evidence="18">
    <location>
        <position position="1171"/>
    </location>
    <ligand>
        <name>Zn(2+)</name>
        <dbReference type="ChEBI" id="CHEBI:29105"/>
        <label>1</label>
        <note>structural; for NS3 protease activity and NS2/3 auto-cleavage activity</note>
    </ligand>
</feature>
<feature type="binding site" evidence="18">
    <location>
        <position position="1175"/>
    </location>
    <ligand>
        <name>Zn(2+)</name>
        <dbReference type="ChEBI" id="CHEBI:29105"/>
        <label>1</label>
        <note>structural; for NS3 protease activity and NS2/3 auto-cleavage activity</note>
    </ligand>
</feature>
<feature type="binding site" evidence="16">
    <location>
        <begin position="1230"/>
        <end position="1237"/>
    </location>
    <ligand>
        <name>ATP</name>
        <dbReference type="ChEBI" id="CHEBI:30616"/>
    </ligand>
</feature>
<feature type="binding site" evidence="13">
    <location>
        <position position="1237"/>
    </location>
    <ligand>
        <name>Mg(2+)</name>
        <dbReference type="ChEBI" id="CHEBI:18420"/>
        <label>1</label>
        <note>catalytic; for NS3 helicase activity</note>
    </ligand>
</feature>
<feature type="binding site" evidence="13">
    <location>
        <position position="1317"/>
    </location>
    <ligand>
        <name>Mg(2+)</name>
        <dbReference type="ChEBI" id="CHEBI:18420"/>
        <label>1</label>
        <note>catalytic; for NS3 helicase activity</note>
    </ligand>
</feature>
<feature type="binding site" evidence="13">
    <location>
        <position position="2011"/>
    </location>
    <ligand>
        <name>Zn(2+)</name>
        <dbReference type="ChEBI" id="CHEBI:29105"/>
        <label>2</label>
        <note>structural</note>
    </ligand>
</feature>
<feature type="binding site" evidence="13">
    <location>
        <position position="2029"/>
    </location>
    <ligand>
        <name>Zn(2+)</name>
        <dbReference type="ChEBI" id="CHEBI:29105"/>
        <label>2</label>
        <note>structural</note>
    </ligand>
</feature>
<feature type="binding site" evidence="13">
    <location>
        <position position="2031"/>
    </location>
    <ligand>
        <name>Zn(2+)</name>
        <dbReference type="ChEBI" id="CHEBI:29105"/>
        <label>2</label>
        <note>structural</note>
    </ligand>
</feature>
<feature type="binding site" evidence="13">
    <location>
        <position position="2052"/>
    </location>
    <ligand>
        <name>Zn(2+)</name>
        <dbReference type="ChEBI" id="CHEBI:29105"/>
        <label>2</label>
        <note>structural</note>
    </ligand>
</feature>
<feature type="binding site" evidence="4">
    <location>
        <position position="2640"/>
    </location>
    <ligand>
        <name>Mg(2+)</name>
        <dbReference type="ChEBI" id="CHEBI:18420"/>
        <label>2</label>
        <note>catalytic; for RNA-directed RNA polymerase activity</note>
    </ligand>
</feature>
<feature type="binding site" evidence="4">
    <location>
        <position position="2738"/>
    </location>
    <ligand>
        <name>Mg(2+)</name>
        <dbReference type="ChEBI" id="CHEBI:18420"/>
        <label>2</label>
        <note>catalytic; for RNA-directed RNA polymerase activity</note>
    </ligand>
</feature>
<feature type="binding site" evidence="4">
    <location>
        <position position="2739"/>
    </location>
    <ligand>
        <name>Mg(2+)</name>
        <dbReference type="ChEBI" id="CHEBI:18420"/>
        <label>2</label>
        <note>catalytic; for RNA-directed RNA polymerase activity</note>
    </ligand>
</feature>
<feature type="site" description="Cleavage; by host signal peptide peptidase" evidence="3">
    <location>
        <begin position="177"/>
        <end position="178"/>
    </location>
</feature>
<feature type="site" description="Cleavage; by host signal peptidase" evidence="3">
    <location>
        <begin position="191"/>
        <end position="192"/>
    </location>
</feature>
<feature type="site" description="Cleavage; by host signal peptidase" evidence="3">
    <location>
        <begin position="383"/>
        <end position="384"/>
    </location>
</feature>
<feature type="site" description="Cleavage; by host signal peptidase" evidence="1">
    <location>
        <begin position="746"/>
        <end position="747"/>
    </location>
</feature>
<feature type="site" description="Cleavage; by host signal peptidase" evidence="1">
    <location>
        <begin position="809"/>
        <end position="810"/>
    </location>
</feature>
<feature type="site" description="Cleavage; by protease NS2" evidence="17">
    <location>
        <begin position="1026"/>
        <end position="1027"/>
    </location>
</feature>
<feature type="site" description="Cleavage; by serine protease/helicase NS3" evidence="6">
    <location>
        <begin position="1657"/>
        <end position="1658"/>
    </location>
</feature>
<feature type="site" description="Cleavage; by serine protease/helicase NS3" evidence="6">
    <location>
        <begin position="1711"/>
        <end position="1712"/>
    </location>
</feature>
<feature type="site" description="CCleavage; by serine protease/helicase NS3" evidence="6">
    <location>
        <begin position="1972"/>
        <end position="1973"/>
    </location>
</feature>
<feature type="site" description="Cleavage; by serine protease/helicase NS3" evidence="6">
    <location>
        <begin position="2420"/>
        <end position="2421"/>
    </location>
</feature>
<feature type="modified residue" description="N-acetylserine; by host" evidence="11">
    <location>
        <position position="2"/>
    </location>
</feature>
<feature type="modified residue" description="Phosphoserine; by host" evidence="8">
    <location>
        <position position="53"/>
    </location>
</feature>
<feature type="modified residue" description="Phosphoserine; by host" evidence="8">
    <location>
        <position position="99"/>
    </location>
</feature>
<feature type="modified residue" description="Phosphoserine; by host PKA" evidence="8">
    <location>
        <position position="116"/>
    </location>
</feature>
<feature type="modified residue" description="Phosphoserine; by host; in p56" evidence="13">
    <location>
        <position position="2194"/>
    </location>
</feature>
<feature type="modified residue" description="Phosphoserine; by host; in p58" evidence="13">
    <location>
        <position position="2197"/>
    </location>
</feature>
<feature type="modified residue" description="Phosphoserine; by host; in p58" evidence="13">
    <location>
        <position position="2201"/>
    </location>
</feature>
<feature type="modified residue" description="Phosphoserine; by host; in p58" evidence="13">
    <location>
        <position position="2204"/>
    </location>
</feature>
<feature type="modified residue" description="Phosphoserine; by host; in p58" evidence="12">
    <location>
        <position position="2207"/>
    </location>
</feature>
<feature type="modified residue" description="Phosphoserine; by host; in p58" evidence="12">
    <location>
        <position position="2210"/>
    </location>
</feature>
<feature type="modified residue" description="Phosphoserine; by host" evidence="3">
    <location>
        <position position="2449"/>
    </location>
</feature>
<feature type="modified residue" description="Phosphoserine; by host" evidence="3">
    <location>
        <position position="2462"/>
    </location>
</feature>
<feature type="lipid moiety-binding region" description="S-palmitoyl cysteine; by host" evidence="6">
    <location>
        <position position="922"/>
    </location>
</feature>
<feature type="lipid moiety-binding region" description="S-palmitoyl cysteine; by host" evidence="6">
    <location>
        <position position="1968"/>
    </location>
</feature>
<feature type="lipid moiety-binding region" description="S-palmitoyl cysteine; by host" evidence="6">
    <location>
        <position position="1972"/>
    </location>
</feature>
<feature type="glycosylation site" description="N-linked (GlcNAc...) asparagine; by host" evidence="6">
    <location>
        <position position="196"/>
    </location>
</feature>
<feature type="glycosylation site" description="N-linked (GlcNAc...) asparagine; by host" evidence="6">
    <location>
        <position position="209"/>
    </location>
</feature>
<feature type="glycosylation site" description="N-linked (GlcNAc...) asparagine; by host" evidence="6">
    <location>
        <position position="234"/>
    </location>
</feature>
<feature type="glycosylation site" description="N-linked (GlcNAc...) asparagine; by host" evidence="14">
    <location>
        <position position="305"/>
    </location>
</feature>
<feature type="glycosylation site" description="N-linked (GlcNAc...) (high mannose) asparagine; by host" evidence="6">
    <location>
        <position position="417"/>
    </location>
</feature>
<feature type="glycosylation site" description="N-linked (GlcNAc...) (high mannose) asparagine; by host" evidence="6">
    <location>
        <position position="423"/>
    </location>
</feature>
<feature type="glycosylation site" description="N-linked (GlcNAc...) (high mannose) asparagine; by host" evidence="6">
    <location>
        <position position="430"/>
    </location>
</feature>
<feature type="glycosylation site" description="N-linked (GlcNAc...) (high mannose) asparagine; by host" evidence="6">
    <location>
        <position position="448"/>
    </location>
</feature>
<feature type="glycosylation site" description="N-linked (GlcNAc...) (high mannose) asparagine; by host" evidence="6">
    <location>
        <position position="532"/>
    </location>
</feature>
<feature type="glycosylation site" description="N-linked (GlcNAc...) asparagine; by host" evidence="14">
    <location>
        <position position="540"/>
    </location>
</feature>
<feature type="glycosylation site" description="N-linked (GlcNAc...) (high mannose) asparagine; by host" evidence="6">
    <location>
        <position position="556"/>
    </location>
</feature>
<feature type="glycosylation site" description="N-linked (GlcNAc...) (high mannose) asparagine; by host" evidence="6">
    <location>
        <position position="576"/>
    </location>
</feature>
<feature type="glycosylation site" description="N-linked (GlcNAc...) (high mannose) asparagine; by host" evidence="6">
    <location>
        <position position="623"/>
    </location>
</feature>
<feature type="glycosylation site" description="N-linked (GlcNAc...) (high mannose) asparagine; by host" evidence="6">
    <location>
        <position position="645"/>
    </location>
</feature>
<feature type="disulfide bond" evidence="6">
    <location>
        <begin position="429"/>
        <end position="552"/>
    </location>
</feature>
<feature type="disulfide bond" evidence="6">
    <location>
        <begin position="452"/>
        <end position="459"/>
    </location>
</feature>
<feature type="disulfide bond" evidence="6">
    <location>
        <begin position="486"/>
        <end position="494"/>
    </location>
</feature>
<feature type="disulfide bond" evidence="6">
    <location>
        <begin position="503"/>
        <end position="508"/>
    </location>
</feature>
<feature type="disulfide bond" evidence="6">
    <location>
        <begin position="564"/>
        <end position="569"/>
    </location>
</feature>
<feature type="disulfide bond" evidence="6">
    <location>
        <begin position="581"/>
        <end position="585"/>
    </location>
</feature>
<feature type="disulfide bond" evidence="6">
    <location>
        <begin position="597"/>
        <end position="620"/>
    </location>
</feature>
<feature type="disulfide bond" evidence="6">
    <location>
        <begin position="607"/>
        <end position="644"/>
    </location>
</feature>
<feature type="disulfide bond" evidence="6">
    <location>
        <begin position="652"/>
        <end position="677"/>
    </location>
</feature>
<feature type="cross-link" description="Glycyl lysine isopeptide (Lys-Gly) (interchain with G-Cter in ubiquitin)" evidence="6">
    <location>
        <position position="2350"/>
    </location>
</feature>
<organismHost>
    <name type="scientific">Homo sapiens</name>
    <name type="common">Human</name>
    <dbReference type="NCBI Taxonomy" id="9606"/>
</organismHost>
<accession>Q81754</accession>
<organism>
    <name type="scientific">Hepatitis C virus genotype 1c (isolate HC-G9)</name>
    <name type="common">HCV</name>
    <dbReference type="NCBI Taxonomy" id="356410"/>
    <lineage>
        <taxon>Viruses</taxon>
        <taxon>Riboviria</taxon>
        <taxon>Orthornavirae</taxon>
        <taxon>Kitrinoviricota</taxon>
        <taxon>Flasuviricetes</taxon>
        <taxon>Amarillovirales</taxon>
        <taxon>Flaviviridae</taxon>
        <taxon>Hepacivirus</taxon>
        <taxon>Hepacivirus hominis</taxon>
    </lineage>
</organism>
<name>POLG_HCVH9</name>
<proteinExistence type="inferred from homology"/>
<sequence length="3011" mass="327216">MSTNPKPQRKTKRNTNRRPQDVKFPGGGQIVGGVYLLPRRGPRVGVRATRKTSERSQPRGRRQPIPKARRPEGRSWAQPGYPWPLYGNEGCGWAGWLLSPRGSRPSWGPSDPRRRSRNLGKVIDTLTCGFADLMGYIPLVGAPLGGAARALAHGVRVLEDGVNYATGNLPGCSFSIFLLALLSCLTVPASAVGVRNSSGVYHVTNDCPNASVVYETENLIMHLPGCVPYVREGNASRCWVSLSPTVAARDSRVPVSEVRRRVDSIVGAAAFCSAMYVGDLCGSIFLVGQIFTFSPRHHWTTQDCNCSIYPGHVTGHRMAWDMMMNWSPTGALVVAQLLRIPQAIVDMIAGAHWGVLAGLAYYSMVGNWAKVVVVLLLFAGVDAETRVTGGAAGHTAFGFASFLAPGAKQKIQLINTNGSWHINRTALNCNESLDTGWLAGLLYYHKFNSSGCPERMASCQPLTAFDQGWGPITHEGNASDDQRPYCWHYALRPCGIVPAKKVCGPVYCFTPSPVVVGTTDRAGVPTYRWGANETDVLLLNNSRPPMGNWFGCTWMNSSGFTKTCGAPACNIGGSGNNTLLCPTDCFRKHPDATYSRCGSGPWLTPRCLVDYPYRLWHYPCTVNYTIFKIRMFVGGVEHRLDAACNWTRGERCDLDDRDRAELSPLLLSTTQWQVLPCSFTTLPALSTGLIHLHQNIVDVQYLYGLSSAVTSWVIKWEYVVLLFLLLADARICACLWMMLLISQVEAALENLIVLNAASLVGTHGIVPFFIFFCAAWYLKGKWAPGLAYSVYGMWPLLLLLLALPQRAYALDQELAASCGATVFICLAVLTLSPYYKQYMARGIWWLQYMLTRAEALLQVWVPPLNARGGRDGVVLLTCVLHPHLLFEITKIMLAILGPLWILQASLLKVPYFVRAHGLIRLCMLVRKTAGGQYVQMALLKLGAFAGTYIYNHLSPLQDWAHSGLRDLAVATEPVIFSRMEIKTITWGADTAACGDIINGLPVSARRGREVLLGPADALTDKGWRLLAPITAYAQQTRGLLGCIITSLTGRDKNQVEGEVQIVSTATQTFLATCVNGVCWTVYHGAGSRTIASASGPVIQMYTNVDQDLVGWPAPQGARSLTPCTCGASDLYLVTRHADVIPVRRRGDNRGSLLSPRPISYLKGSSGGPLLCPMGHAVGIFRAAVCTRGVAKAVDFVPVESLETTMRSPVFTDNSSPPTVPQSYQVAHLHAPTGSGKSTKVPAAYAAQGYKVLVLNPSVAATLGFGAYMSKAHGIDPNVRTGVRTITTGSPITHSTYGKFLADGGCSGGAYDIIICDECHSVDATSILGIGTVLDQAETAGVRLTILATATPPGSVTVPHSNIEEVALSTEGEIPFYGKAIPLNYIKGGRHLIFCHSKKKCDELAAKLVGLGVNAVAFYRGLDVSVIPTTGDVVVVATDALMTGYTGDFDSVIDCNTCVVQTVDFSLDPTFSIETSTVPQDAVSRSQRRGRTGRGKHGIYRYVSPGERPSGMFDSVVLCECYDAGCAWYELTPAETTVRLRAYLNTPGLPVCQDHLEFWESVFTGLTHIDAHFLSQTKQSGENFPYLVAYQATVCARAKAPPPSWDQMWKCLIRLKPTLTGATPLLYRLGGVQNEITLTHPITKYIMACMSADLEVVTSTWVLVGGVLAALAAYCLSTGSVVIVGRIILSGKPAVIPDREVLYREFDEMEECAAHIPYLEQGMHLAEQFKQKALGLLQTASKQAETITPAVHTNWQKLESFWAKHMWNFVSGIQYLAGLSTLPGNPAIASLMSFTAAVTSPLTTQQTLLFNILGGWVAAQLAAPAAATAFVGAGITGAVIGSVGLGKVLVDILAGYGAGVAGALVAFKIMSGEAPTAEDLVNLLPAILSPGALVVGVVCAAILRRHVGPGEGAVQWMNRLIAFASRGNHVSPTHYVPESDASVRVTHILTSLTVTQLLKRLHVWISSDCTAPCAGSWLKDVWDWICEVLSDFKSWLKAKLMPQLPGIPFVSCQRGYRGVWRGEGIMHARCPCGADITGHVKNGSMRIVGPKTCSNTWRGSFPINAHTTGPCTPSPAPNYTFALWRVSAEEYVEVRRLGDFHYITGVTTDKIKCPCQVPSPEFFTEVDGVRLHRYAPPCKPLLRDEVTFSIGLNEYLVGSQLPCEPEPDVAVLTSMLTDPSHITAETAARRLNRGSPPSLASSSASQLSAPSLKATCTTHHDSPDADLITANLLWRQEMGGNITRVESENKIVILDSFDPLVAEEDDREISVPAEILLKSKKFPPAMPIWARPDYNPPLVEPWKRPDYEPPLVHGCPLPPPKPTPVPPPRRKRTVVLDESTVSSALAELATKTFGSSTTSGVTSGEAAESSPAPSCDGELDSEAESYSSMPPLEGEPGDPDLSDGSWSTVSSDGGTEDVVCCSMSYSWTGALITPCAAEETKLPINALSNSLLRHHNLVYSTTSRSAGQRQKKVTFDRLQVLDDHYRDVLKEAKAKASTVKAKLLSVEEACSLTPPHSARSKFGYGAKDVRSHSSKAIRHINSVWQDLLEDNTTPIDTTIMAKNEVFCVKPEKGGRKPARLIVYPDLGVRVCEKRALYDVVKQLPIAVMGTSYGFQYSPAQRVDFLLNAWKSKKNPMGFSYDTRCFDSTVTEADIRTEEDLYQSCDLVPEARAAIRSLTERLYIGGPLTNSKGQNCGYRRCRASGVLTTSCGNTITCYLKASAACRAAKLRDCTMLVCGDDLVVICESAGVQEDAANLRAFTEAMTRYSAPPGDPPQPEYDLELITSCSSNVSVAHDGAGKRVYYLTRDPETPLARAAWETARHTPVNSWLGNIIMFAPTLWVRMVLMTHFFSILIAQEHLEKALDCEIYGAVHSVQPLDLPEIIQRLHGLSAFSLHSYSPGEINRVAACLRKLGVPPLRAWRHRARSVRATLLSQGGRAAICGKYLFNWAVKTKLKLTPLPSASQLDLSNWFTGGYSGGDIYHSVSHVRPRWFFWCLLLLSVGVGIYLLPNR</sequence>